<accession>Q15788</accession>
<accession>O00150</accession>
<accession>O43792</accession>
<accession>O43793</accession>
<accession>Q13071</accession>
<accession>Q13420</accession>
<accession>Q2T9G5</accession>
<accession>Q53SX3</accession>
<accession>Q6GVI5</accession>
<accession>Q7KYV3</accession>
<dbReference type="EC" id="2.3.1.48"/>
<dbReference type="EMBL" id="U59302">
    <property type="protein sequence ID" value="AAC50631.1"/>
    <property type="molecule type" value="mRNA"/>
</dbReference>
<dbReference type="EMBL" id="AJ000881">
    <property type="protein sequence ID" value="CAA04371.1"/>
    <property type="molecule type" value="mRNA"/>
</dbReference>
<dbReference type="EMBL" id="AJ000882">
    <property type="protein sequence ID" value="CAA04372.1"/>
    <property type="molecule type" value="mRNA"/>
</dbReference>
<dbReference type="EMBL" id="U90661">
    <property type="protein sequence ID" value="AAB50242.1"/>
    <property type="molecule type" value="mRNA"/>
</dbReference>
<dbReference type="EMBL" id="EF660499">
    <property type="protein sequence ID" value="ABS29266.1"/>
    <property type="molecule type" value="Genomic_DNA"/>
</dbReference>
<dbReference type="EMBL" id="AC013459">
    <property type="protein sequence ID" value="AAX93184.1"/>
    <property type="molecule type" value="Genomic_DNA"/>
</dbReference>
<dbReference type="EMBL" id="AC093798">
    <property type="status" value="NOT_ANNOTATED_CDS"/>
    <property type="molecule type" value="Genomic_DNA"/>
</dbReference>
<dbReference type="EMBL" id="CH471053">
    <property type="protein sequence ID" value="EAX00746.1"/>
    <property type="molecule type" value="Genomic_DNA"/>
</dbReference>
<dbReference type="EMBL" id="BC111533">
    <property type="protein sequence ID" value="AAI11534.1"/>
    <property type="molecule type" value="mRNA"/>
</dbReference>
<dbReference type="EMBL" id="BC111534">
    <property type="protein sequence ID" value="AAI11535.1"/>
    <property type="molecule type" value="mRNA"/>
</dbReference>
<dbReference type="EMBL" id="U40396">
    <property type="protein sequence ID" value="AAC50305.1"/>
    <property type="status" value="ALT_INIT"/>
    <property type="molecule type" value="mRNA"/>
</dbReference>
<dbReference type="EMBL" id="U19179">
    <property type="protein sequence ID" value="AAA64187.1"/>
    <property type="status" value="ALT_INIT"/>
    <property type="molecule type" value="mRNA"/>
</dbReference>
<dbReference type="EMBL" id="AY633656">
    <property type="protein sequence ID" value="AAT47737.1"/>
    <property type="molecule type" value="mRNA"/>
</dbReference>
<dbReference type="CCDS" id="CCDS1712.1">
    <molecule id="Q15788-1"/>
</dbReference>
<dbReference type="CCDS" id="CCDS1713.1">
    <molecule id="Q15788-2"/>
</dbReference>
<dbReference type="CCDS" id="CCDS42660.1">
    <molecule id="Q15788-3"/>
</dbReference>
<dbReference type="PIR" id="A57620">
    <property type="entry name" value="A57620"/>
</dbReference>
<dbReference type="PIR" id="PC4363">
    <property type="entry name" value="PC4363"/>
</dbReference>
<dbReference type="PIR" id="PC4364">
    <property type="entry name" value="PC4364"/>
</dbReference>
<dbReference type="RefSeq" id="NP_001349879.1">
    <molecule id="Q15788-2"/>
    <property type="nucleotide sequence ID" value="NM_001362950.1"/>
</dbReference>
<dbReference type="RefSeq" id="NP_001349881.1">
    <molecule id="Q15788-2"/>
    <property type="nucleotide sequence ID" value="NM_001362952.1"/>
</dbReference>
<dbReference type="RefSeq" id="NP_001349883.1">
    <molecule id="Q15788-2"/>
    <property type="nucleotide sequence ID" value="NM_001362954.1"/>
</dbReference>
<dbReference type="RefSeq" id="NP_001349884.1">
    <molecule id="Q15788-2"/>
    <property type="nucleotide sequence ID" value="NM_001362955.1"/>
</dbReference>
<dbReference type="RefSeq" id="NP_003734.3">
    <molecule id="Q15788-1"/>
    <property type="nucleotide sequence ID" value="NM_003743.4"/>
</dbReference>
<dbReference type="RefSeq" id="NP_671756.1">
    <molecule id="Q15788-2"/>
    <property type="nucleotide sequence ID" value="NM_147223.3"/>
</dbReference>
<dbReference type="RefSeq" id="NP_671766.1">
    <molecule id="Q15788-3"/>
    <property type="nucleotide sequence ID" value="NM_147233.2"/>
</dbReference>
<dbReference type="RefSeq" id="XP_005264682.1">
    <property type="nucleotide sequence ID" value="XM_005264625.1"/>
</dbReference>
<dbReference type="RefSeq" id="XP_005264683.1">
    <property type="nucleotide sequence ID" value="XM_005264626.1"/>
</dbReference>
<dbReference type="RefSeq" id="XP_005264685.1">
    <property type="nucleotide sequence ID" value="XM_005264628.1"/>
</dbReference>
<dbReference type="RefSeq" id="XP_016860657.1">
    <property type="nucleotide sequence ID" value="XM_017005168.1"/>
</dbReference>
<dbReference type="RefSeq" id="XP_016860658.1">
    <property type="nucleotide sequence ID" value="XM_017005169.1"/>
</dbReference>
<dbReference type="RefSeq" id="XP_047302107.1">
    <molecule id="Q15788-1"/>
    <property type="nucleotide sequence ID" value="XM_047446151.1"/>
</dbReference>
<dbReference type="RefSeq" id="XP_047302108.1">
    <molecule id="Q15788-1"/>
    <property type="nucleotide sequence ID" value="XM_047446152.1"/>
</dbReference>
<dbReference type="RefSeq" id="XP_047302109.1">
    <molecule id="Q15788-1"/>
    <property type="nucleotide sequence ID" value="XM_047446153.1"/>
</dbReference>
<dbReference type="RefSeq" id="XP_047302110.1">
    <molecule id="Q15788-1"/>
    <property type="nucleotide sequence ID" value="XM_047446154.1"/>
</dbReference>
<dbReference type="RefSeq" id="XP_047302111.1">
    <molecule id="Q15788-1"/>
    <property type="nucleotide sequence ID" value="XM_047446155.1"/>
</dbReference>
<dbReference type="RefSeq" id="XP_047302112.1">
    <molecule id="Q15788-1"/>
    <property type="nucleotide sequence ID" value="XM_047446156.1"/>
</dbReference>
<dbReference type="RefSeq" id="XP_047302113.1">
    <molecule id="Q15788-3"/>
    <property type="nucleotide sequence ID" value="XM_047446157.1"/>
</dbReference>
<dbReference type="RefSeq" id="XP_054200298.1">
    <molecule id="Q15788-1"/>
    <property type="nucleotide sequence ID" value="XM_054344323.1"/>
</dbReference>
<dbReference type="RefSeq" id="XP_054200299.1">
    <molecule id="Q15788-1"/>
    <property type="nucleotide sequence ID" value="XM_054344324.1"/>
</dbReference>
<dbReference type="RefSeq" id="XP_054200300.1">
    <molecule id="Q15788-1"/>
    <property type="nucleotide sequence ID" value="XM_054344325.1"/>
</dbReference>
<dbReference type="RefSeq" id="XP_054200301.1">
    <molecule id="Q15788-1"/>
    <property type="nucleotide sequence ID" value="XM_054344326.1"/>
</dbReference>
<dbReference type="PDB" id="1FM6">
    <property type="method" value="X-ray"/>
    <property type="resolution" value="2.10 A"/>
    <property type="chains" value="B/E/V/Y=676-700"/>
</dbReference>
<dbReference type="PDB" id="1FM9">
    <property type="method" value="X-ray"/>
    <property type="resolution" value="2.10 A"/>
    <property type="chains" value="B/E=676-700"/>
</dbReference>
<dbReference type="PDB" id="1K4W">
    <property type="method" value="X-ray"/>
    <property type="resolution" value="1.90 A"/>
    <property type="chains" value="B=686-700"/>
</dbReference>
<dbReference type="PDB" id="1K74">
    <property type="method" value="X-ray"/>
    <property type="resolution" value="2.30 A"/>
    <property type="chains" value="B/E=676-700"/>
</dbReference>
<dbReference type="PDB" id="1K7L">
    <property type="method" value="X-ray"/>
    <property type="resolution" value="2.50 A"/>
    <property type="chains" value="B/D/F/H=680-700"/>
</dbReference>
<dbReference type="PDB" id="1KV6">
    <property type="method" value="X-ray"/>
    <property type="resolution" value="2.70 A"/>
    <property type="chains" value="C/D=686-700"/>
</dbReference>
<dbReference type="PDB" id="1N4H">
    <property type="method" value="X-ray"/>
    <property type="resolution" value="2.10 A"/>
    <property type="chains" value="B=686-700"/>
</dbReference>
<dbReference type="PDB" id="1NQ7">
    <property type="method" value="X-ray"/>
    <property type="resolution" value="1.50 A"/>
    <property type="chains" value="B=687-696"/>
</dbReference>
<dbReference type="PDB" id="1NRL">
    <property type="method" value="X-ray"/>
    <property type="resolution" value="2.00 A"/>
    <property type="chains" value="C/D=676-700"/>
</dbReference>
<dbReference type="PDB" id="1P8D">
    <property type="method" value="X-ray"/>
    <property type="resolution" value="2.80 A"/>
    <property type="chains" value="C/D=676-700"/>
</dbReference>
<dbReference type="PDB" id="1PZL">
    <property type="method" value="X-ray"/>
    <property type="resolution" value="2.10 A"/>
    <property type="chains" value="B=687-700"/>
</dbReference>
<dbReference type="PDB" id="1RDT">
    <property type="method" value="X-ray"/>
    <property type="resolution" value="2.40 A"/>
    <property type="chains" value="B=676-700"/>
</dbReference>
<dbReference type="PDB" id="1TFC">
    <property type="method" value="X-ray"/>
    <property type="resolution" value="2.40 A"/>
    <property type="chains" value="C/D=686-700"/>
</dbReference>
<dbReference type="PDB" id="1U3R">
    <property type="method" value="X-ray"/>
    <property type="resolution" value="2.21 A"/>
    <property type="chains" value="C/D=630-640"/>
</dbReference>
<dbReference type="PDB" id="1U3S">
    <property type="method" value="X-ray"/>
    <property type="resolution" value="2.50 A"/>
    <property type="chains" value="C/D=630-640"/>
</dbReference>
<dbReference type="PDB" id="1X76">
    <property type="method" value="X-ray"/>
    <property type="resolution" value="2.20 A"/>
    <property type="chains" value="C/D=630-640"/>
</dbReference>
<dbReference type="PDB" id="1X78">
    <property type="method" value="X-ray"/>
    <property type="resolution" value="2.30 A"/>
    <property type="chains" value="C/D=630-640"/>
</dbReference>
<dbReference type="PDB" id="1X7B">
    <property type="method" value="X-ray"/>
    <property type="resolution" value="2.30 A"/>
    <property type="chains" value="C/D=630-640"/>
</dbReference>
<dbReference type="PDB" id="1X7J">
    <property type="method" value="X-ray"/>
    <property type="resolution" value="2.30 A"/>
    <property type="chains" value="C/D=630-640"/>
</dbReference>
<dbReference type="PDB" id="1XIU">
    <property type="method" value="X-ray"/>
    <property type="resolution" value="2.50 A"/>
    <property type="chains" value="E/F=686-700"/>
</dbReference>
<dbReference type="PDB" id="1XV9">
    <property type="method" value="X-ray"/>
    <property type="resolution" value="2.70 A"/>
    <property type="chains" value="E/F/G/H=685-697"/>
</dbReference>
<dbReference type="PDB" id="1XVP">
    <property type="method" value="X-ray"/>
    <property type="resolution" value="2.60 A"/>
    <property type="chains" value="E/F/G/H=685-697"/>
</dbReference>
<dbReference type="PDB" id="1YY4">
    <property type="method" value="X-ray"/>
    <property type="resolution" value="2.70 A"/>
    <property type="chains" value="C/D=630-640"/>
</dbReference>
<dbReference type="PDB" id="1YYE">
    <property type="method" value="X-ray"/>
    <property type="resolution" value="2.03 A"/>
    <property type="chains" value="C/D=630-640"/>
</dbReference>
<dbReference type="PDB" id="1ZAF">
    <property type="method" value="X-ray"/>
    <property type="resolution" value="2.20 A"/>
    <property type="chains" value="C/D=630-640"/>
</dbReference>
<dbReference type="PDB" id="2A3I">
    <property type="method" value="X-ray"/>
    <property type="resolution" value="1.95 A"/>
    <property type="chains" value="B=1430-1441"/>
</dbReference>
<dbReference type="PDB" id="2C52">
    <property type="method" value="NMR"/>
    <property type="chains" value="B=920-970"/>
</dbReference>
<dbReference type="PDB" id="2FVJ">
    <property type="method" value="X-ray"/>
    <property type="resolution" value="1.99 A"/>
    <property type="chains" value="B=628-640"/>
</dbReference>
<dbReference type="PDB" id="2GTK">
    <property type="method" value="X-ray"/>
    <property type="resolution" value="2.10 A"/>
    <property type="chains" value="B=631-640"/>
</dbReference>
<dbReference type="PDB" id="2HBH">
    <property type="method" value="X-ray"/>
    <property type="resolution" value="2.65 A"/>
    <property type="chains" value="B=686-700"/>
</dbReference>
<dbReference type="PDB" id="2HC4">
    <property type="method" value="X-ray"/>
    <property type="resolution" value="2.20 A"/>
    <property type="chains" value="B=686-700"/>
</dbReference>
<dbReference type="PDB" id="2HCD">
    <property type="method" value="X-ray"/>
    <property type="resolution" value="2.60 A"/>
    <property type="chains" value="B=686-700"/>
</dbReference>
<dbReference type="PDB" id="2HFP">
    <property type="method" value="X-ray"/>
    <property type="resolution" value="2.00 A"/>
    <property type="chains" value="B=680-700"/>
</dbReference>
<dbReference type="PDB" id="2NPA">
    <property type="method" value="X-ray"/>
    <property type="resolution" value="2.30 A"/>
    <property type="chains" value="B/D=683-697"/>
</dbReference>
<dbReference type="PDB" id="2NV7">
    <property type="method" value="X-ray"/>
    <property type="resolution" value="2.10 A"/>
    <property type="chains" value="C/D=631-640"/>
</dbReference>
<dbReference type="PDB" id="2P54">
    <property type="method" value="X-ray"/>
    <property type="resolution" value="1.79 A"/>
    <property type="chains" value="B=686-696"/>
</dbReference>
<dbReference type="PDB" id="2PRG">
    <property type="method" value="X-ray"/>
    <property type="resolution" value="2.30 A"/>
    <property type="chains" value="C=623-710"/>
</dbReference>
<dbReference type="PDB" id="3BEJ">
    <property type="method" value="X-ray"/>
    <property type="resolution" value="1.90 A"/>
    <property type="chains" value="E/F=676-700"/>
</dbReference>
<dbReference type="PDB" id="3BQD">
    <property type="method" value="X-ray"/>
    <property type="resolution" value="2.50 A"/>
    <property type="chains" value="B=1429-1441"/>
</dbReference>
<dbReference type="PDB" id="3CTB">
    <property type="method" value="X-ray"/>
    <property type="resolution" value="2.00 A"/>
    <property type="chains" value="A/B=678-700"/>
</dbReference>
<dbReference type="PDB" id="3CWD">
    <property type="method" value="X-ray"/>
    <property type="resolution" value="2.40 A"/>
    <property type="chains" value="C/D=685-700"/>
</dbReference>
<dbReference type="PDB" id="3DCT">
    <property type="method" value="X-ray"/>
    <property type="resolution" value="2.50 A"/>
    <property type="chains" value="B=741-761"/>
</dbReference>
<dbReference type="PDB" id="3DCU">
    <property type="method" value="X-ray"/>
    <property type="resolution" value="2.95 A"/>
    <property type="chains" value="B=741-761"/>
</dbReference>
<dbReference type="PDB" id="3DR1">
    <property type="method" value="X-ray"/>
    <property type="resolution" value="2.70 A"/>
    <property type="chains" value="B=686-700"/>
</dbReference>
<dbReference type="PDB" id="3ET1">
    <property type="method" value="X-ray"/>
    <property type="resolution" value="2.50 A"/>
    <property type="chains" value="P/Q=681-696"/>
</dbReference>
<dbReference type="PDB" id="3ET3">
    <property type="method" value="X-ray"/>
    <property type="resolution" value="1.95 A"/>
    <property type="chains" value="P=680-695"/>
</dbReference>
<dbReference type="PDB" id="3FEI">
    <property type="method" value="X-ray"/>
    <property type="resolution" value="2.40 A"/>
    <property type="chains" value="Z=744-756"/>
</dbReference>
<dbReference type="PDB" id="3FEJ">
    <property type="method" value="X-ray"/>
    <property type="resolution" value="2.01 A"/>
    <property type="chains" value="B=628-640"/>
</dbReference>
<dbReference type="PDB" id="3FUR">
    <property type="method" value="X-ray"/>
    <property type="resolution" value="2.30 A"/>
    <property type="chains" value="H=629-640"/>
</dbReference>
<dbReference type="PDB" id="3FXV">
    <property type="method" value="X-ray"/>
    <property type="resolution" value="2.26 A"/>
    <property type="chains" value="B=744-756"/>
</dbReference>
<dbReference type="PDB" id="3G8I">
    <property type="method" value="X-ray"/>
    <property type="resolution" value="2.20 A"/>
    <property type="chains" value="Z=744-756"/>
</dbReference>
<dbReference type="PDB" id="3G9E">
    <property type="method" value="X-ray"/>
    <property type="resolution" value="2.30 A"/>
    <property type="chains" value="B=628-640"/>
</dbReference>
<dbReference type="PDB" id="3GYT">
    <property type="method" value="X-ray"/>
    <property type="resolution" value="2.40 A"/>
    <property type="chains" value="B=1429-1441"/>
</dbReference>
<dbReference type="PDB" id="3GYU">
    <property type="method" value="X-ray"/>
    <property type="resolution" value="2.40 A"/>
    <property type="chains" value="B=1429-1441"/>
</dbReference>
<dbReference type="PDB" id="3H0A">
    <property type="method" value="X-ray"/>
    <property type="resolution" value="2.10 A"/>
    <property type="chains" value="B/E=629-640"/>
</dbReference>
<dbReference type="PDB" id="3HC5">
    <property type="method" value="X-ray"/>
    <property type="resolution" value="2.60 A"/>
    <property type="chains" value="B=741-761"/>
</dbReference>
<dbReference type="PDB" id="3HC6">
    <property type="method" value="X-ray"/>
    <property type="resolution" value="3.20 A"/>
    <property type="chains" value="B=741-761"/>
</dbReference>
<dbReference type="PDB" id="3HVL">
    <property type="method" value="X-ray"/>
    <property type="resolution" value="2.10 A"/>
    <property type="chains" value="A/B=678-700"/>
</dbReference>
<dbReference type="PDB" id="3IPQ">
    <property type="method" value="X-ray"/>
    <property type="resolution" value="2.00 A"/>
    <property type="chains" value="B=676-700"/>
</dbReference>
<dbReference type="PDB" id="3IPS">
    <property type="method" value="X-ray"/>
    <property type="resolution" value="2.26 A"/>
    <property type="chains" value="C/D=676-700"/>
</dbReference>
<dbReference type="PDB" id="3IPU">
    <property type="method" value="X-ray"/>
    <property type="resolution" value="2.40 A"/>
    <property type="chains" value="C/D=676-700"/>
</dbReference>
<dbReference type="PDB" id="3KMR">
    <property type="method" value="X-ray"/>
    <property type="resolution" value="1.80 A"/>
    <property type="chains" value="C=686-698"/>
</dbReference>
<dbReference type="PDB" id="3LMP">
    <property type="method" value="X-ray"/>
    <property type="resolution" value="1.90 A"/>
    <property type="chains" value="C=686-700"/>
</dbReference>
<dbReference type="PDB" id="3OKH">
    <property type="method" value="X-ray"/>
    <property type="resolution" value="2.50 A"/>
    <property type="chains" value="B=744-757"/>
</dbReference>
<dbReference type="PDB" id="3OKI">
    <property type="method" value="X-ray"/>
    <property type="resolution" value="2.00 A"/>
    <property type="chains" value="B/D=744-757"/>
</dbReference>
<dbReference type="PDB" id="3OLF">
    <property type="method" value="X-ray"/>
    <property type="resolution" value="1.90 A"/>
    <property type="chains" value="B/D=744-757"/>
</dbReference>
<dbReference type="PDB" id="3OLL">
    <property type="method" value="X-ray"/>
    <property type="resolution" value="1.50 A"/>
    <property type="chains" value="C/D=683-701"/>
</dbReference>
<dbReference type="PDB" id="3OLS">
    <property type="method" value="X-ray"/>
    <property type="resolution" value="2.20 A"/>
    <property type="chains" value="C/D=683-701"/>
</dbReference>
<dbReference type="PDB" id="3OMK">
    <property type="method" value="X-ray"/>
    <property type="resolution" value="1.90 A"/>
    <property type="chains" value="B/D=744-757"/>
</dbReference>
<dbReference type="PDB" id="3OMM">
    <property type="method" value="X-ray"/>
    <property type="resolution" value="2.10 A"/>
    <property type="chains" value="B/D=744-757"/>
</dbReference>
<dbReference type="PDB" id="3OMO">
    <property type="method" value="X-ray"/>
    <property type="resolution" value="2.21 A"/>
    <property type="chains" value="C/D=683-701"/>
</dbReference>
<dbReference type="PDB" id="3OMP">
    <property type="method" value="X-ray"/>
    <property type="resolution" value="2.05 A"/>
    <property type="chains" value="C/D=683-701"/>
</dbReference>
<dbReference type="PDB" id="3OMQ">
    <property type="method" value="X-ray"/>
    <property type="resolution" value="1.97 A"/>
    <property type="chains" value="C/D=683-701"/>
</dbReference>
<dbReference type="PDB" id="3OOF">
    <property type="method" value="X-ray"/>
    <property type="resolution" value="2.29 A"/>
    <property type="chains" value="B/D=744-757"/>
</dbReference>
<dbReference type="PDB" id="3OOK">
    <property type="method" value="X-ray"/>
    <property type="resolution" value="2.29 A"/>
    <property type="chains" value="B/D=744-757"/>
</dbReference>
<dbReference type="PDB" id="3P88">
    <property type="method" value="X-ray"/>
    <property type="resolution" value="2.95 A"/>
    <property type="chains" value="B=745-755"/>
</dbReference>
<dbReference type="PDB" id="3P89">
    <property type="method" value="X-ray"/>
    <property type="resolution" value="2.30 A"/>
    <property type="chains" value="B=745-755"/>
</dbReference>
<dbReference type="PDB" id="3QT0">
    <property type="method" value="X-ray"/>
    <property type="resolution" value="2.50 A"/>
    <property type="chains" value="C=685-700"/>
</dbReference>
<dbReference type="PDB" id="3RUT">
    <property type="method" value="X-ray"/>
    <property type="resolution" value="3.00 A"/>
    <property type="chains" value="B=745-755"/>
</dbReference>
<dbReference type="PDB" id="3RUU">
    <property type="method" value="X-ray"/>
    <property type="resolution" value="2.50 A"/>
    <property type="chains" value="B=745-755"/>
</dbReference>
<dbReference type="PDB" id="3RVF">
    <property type="method" value="X-ray"/>
    <property type="resolution" value="3.10 A"/>
    <property type="chains" value="B=741-761"/>
</dbReference>
<dbReference type="PDB" id="3S9S">
    <property type="method" value="X-ray"/>
    <property type="resolution" value="2.55 A"/>
    <property type="chains" value="B=685-697"/>
</dbReference>
<dbReference type="PDB" id="3T03">
    <property type="method" value="X-ray"/>
    <property type="resolution" value="2.10 A"/>
    <property type="chains" value="C/D=683-700"/>
</dbReference>
<dbReference type="PDB" id="3UU7">
    <property type="method" value="X-ray"/>
    <property type="resolution" value="2.20 A"/>
    <property type="chains" value="F/G=686-698"/>
</dbReference>
<dbReference type="PDB" id="3UUA">
    <property type="method" value="X-ray"/>
    <property type="resolution" value="2.05 A"/>
    <property type="chains" value="F/G=686-698"/>
</dbReference>
<dbReference type="PDB" id="3UUD">
    <property type="method" value="X-ray"/>
    <property type="resolution" value="1.60 A"/>
    <property type="chains" value="C/D=686-698"/>
</dbReference>
<dbReference type="PDB" id="3V9Y">
    <property type="method" value="X-ray"/>
    <property type="resolution" value="2.10 A"/>
    <property type="chains" value="B=686-700"/>
</dbReference>
<dbReference type="PDB" id="3VN2">
    <property type="method" value="X-ray"/>
    <property type="resolution" value="2.18 A"/>
    <property type="chains" value="C=685-700"/>
</dbReference>
<dbReference type="PDB" id="4DK7">
    <property type="method" value="X-ray"/>
    <property type="resolution" value="2.45 A"/>
    <property type="chains" value="B/D=745-756"/>
</dbReference>
<dbReference type="PDB" id="4DK8">
    <property type="method" value="X-ray"/>
    <property type="resolution" value="2.75 A"/>
    <property type="chains" value="B/D=745-756"/>
</dbReference>
<dbReference type="PDB" id="4DM6">
    <property type="method" value="X-ray"/>
    <property type="resolution" value="1.90 A"/>
    <property type="chains" value="E/F=676-700"/>
</dbReference>
<dbReference type="PDB" id="4DM8">
    <property type="method" value="X-ray"/>
    <property type="resolution" value="2.30 A"/>
    <property type="chains" value="C/D=676-700"/>
</dbReference>
<dbReference type="PDB" id="4DQM">
    <property type="method" value="X-ray"/>
    <property type="resolution" value="2.75 A"/>
    <property type="chains" value="B/D=1432-1441"/>
</dbReference>
<dbReference type="PDB" id="4F9M">
    <property type="method" value="X-ray"/>
    <property type="resolution" value="1.90 A"/>
    <property type="chains" value="C=686-700"/>
</dbReference>
<dbReference type="PDB" id="4FGY">
    <property type="method" value="X-ray"/>
    <property type="resolution" value="2.84 A"/>
    <property type="chains" value="B=686-696"/>
</dbReference>
<dbReference type="PDB" id="4G1D">
    <property type="method" value="X-ray"/>
    <property type="resolution" value="2.90 A"/>
    <property type="chains" value="B=686-700"/>
</dbReference>
<dbReference type="PDB" id="4G1Y">
    <property type="method" value="X-ray"/>
    <property type="resolution" value="2.85 A"/>
    <property type="chains" value="B=686-700"/>
</dbReference>
<dbReference type="PDB" id="4G1Z">
    <property type="method" value="X-ray"/>
    <property type="resolution" value="2.50 A"/>
    <property type="chains" value="B=686-700"/>
</dbReference>
<dbReference type="PDB" id="4G20">
    <property type="method" value="X-ray"/>
    <property type="resolution" value="2.90 A"/>
    <property type="chains" value="B=686-700"/>
</dbReference>
<dbReference type="PDB" id="4G21">
    <property type="method" value="X-ray"/>
    <property type="resolution" value="2.90 A"/>
    <property type="chains" value="B=686-700"/>
</dbReference>
<dbReference type="PDB" id="4G2H">
    <property type="method" value="X-ray"/>
    <property type="resolution" value="2.50 A"/>
    <property type="chains" value="B=686-700"/>
</dbReference>
<dbReference type="PDB" id="4HEE">
    <property type="method" value="X-ray"/>
    <property type="resolution" value="2.50 A"/>
    <property type="chains" value="Y=676-700"/>
</dbReference>
<dbReference type="PDB" id="4J5X">
    <property type="method" value="X-ray"/>
    <property type="resolution" value="2.80 A"/>
    <property type="chains" value="A/B/C/D=678-700"/>
</dbReference>
<dbReference type="PDB" id="4JYG">
    <property type="method" value="X-ray"/>
    <property type="resolution" value="2.35 A"/>
    <property type="chains" value="F/G=686-698"/>
</dbReference>
<dbReference type="PDB" id="4JYH">
    <property type="method" value="X-ray"/>
    <property type="resolution" value="2.60 A"/>
    <property type="chains" value="C/G=686-698"/>
</dbReference>
<dbReference type="PDB" id="4JYI">
    <property type="method" value="X-ray"/>
    <property type="resolution" value="1.90 A"/>
    <property type="chains" value="F/G=686-698"/>
</dbReference>
<dbReference type="PDB" id="4MG5">
    <property type="method" value="X-ray"/>
    <property type="resolution" value="2.05 A"/>
    <property type="chains" value="C/D=686-698"/>
</dbReference>
<dbReference type="PDB" id="4MG6">
    <property type="method" value="X-ray"/>
    <property type="resolution" value="2.10 A"/>
    <property type="chains" value="C/D=686-698"/>
</dbReference>
<dbReference type="PDB" id="4MG7">
    <property type="method" value="X-ray"/>
    <property type="resolution" value="2.15 A"/>
    <property type="chains" value="C/D=686-698"/>
</dbReference>
<dbReference type="PDB" id="4MG8">
    <property type="method" value="X-ray"/>
    <property type="resolution" value="1.85 A"/>
    <property type="chains" value="C/D=686-698"/>
</dbReference>
<dbReference type="PDB" id="4MG9">
    <property type="method" value="X-ray"/>
    <property type="resolution" value="2.00 A"/>
    <property type="chains" value="F/G=686-698"/>
</dbReference>
<dbReference type="PDB" id="4MGA">
    <property type="method" value="X-ray"/>
    <property type="resolution" value="1.80 A"/>
    <property type="chains" value="C/D=686-698"/>
</dbReference>
<dbReference type="PDB" id="4MGB">
    <property type="method" value="X-ray"/>
    <property type="resolution" value="1.85 A"/>
    <property type="chains" value="C/D=686-698"/>
</dbReference>
<dbReference type="PDB" id="4MGC">
    <property type="method" value="X-ray"/>
    <property type="resolution" value="2.15 A"/>
    <property type="chains" value="F/G=686-698"/>
</dbReference>
<dbReference type="PDB" id="4MGD">
    <property type="method" value="X-ray"/>
    <property type="resolution" value="1.90 A"/>
    <property type="chains" value="F/G=686-698"/>
</dbReference>
<dbReference type="PDB" id="4RUJ">
    <property type="method" value="X-ray"/>
    <property type="resolution" value="2.35 A"/>
    <property type="chains" value="B=686-700"/>
</dbReference>
<dbReference type="PDB" id="4RUP">
    <property type="method" value="X-ray"/>
    <property type="resolution" value="2.75 A"/>
    <property type="chains" value="B=686-700"/>
</dbReference>
<dbReference type="PDB" id="4TUZ">
    <property type="method" value="X-ray"/>
    <property type="resolution" value="1.90 A"/>
    <property type="chains" value="F/G=686-698"/>
</dbReference>
<dbReference type="PDB" id="4TV1">
    <property type="method" value="X-ray"/>
    <property type="resolution" value="1.85 A"/>
    <property type="chains" value="C/D=686-698"/>
</dbReference>
<dbReference type="PDB" id="4UDA">
    <property type="method" value="X-ray"/>
    <property type="resolution" value="2.03 A"/>
    <property type="chains" value="B=1427-1441"/>
</dbReference>
<dbReference type="PDB" id="4UDB">
    <property type="method" value="X-ray"/>
    <property type="resolution" value="2.36 A"/>
    <property type="chains" value="B=1427-1441"/>
</dbReference>
<dbReference type="PDB" id="4Y29">
    <property type="method" value="X-ray"/>
    <property type="resolution" value="1.98 A"/>
    <property type="chains" value="B=1432-1441"/>
</dbReference>
<dbReference type="PDB" id="5A86">
    <property type="method" value="X-ray"/>
    <property type="resolution" value="2.25 A"/>
    <property type="chains" value="C/D=682-698"/>
</dbReference>
<dbReference type="PDB" id="5AVI">
    <property type="method" value="X-ray"/>
    <property type="resolution" value="2.70 A"/>
    <property type="chains" value="B/D=676-700"/>
</dbReference>
<dbReference type="PDB" id="5AVL">
    <property type="method" value="X-ray"/>
    <property type="resolution" value="2.80 A"/>
    <property type="chains" value="B=676-700"/>
</dbReference>
<dbReference type="PDB" id="5AZT">
    <property type="method" value="X-ray"/>
    <property type="resolution" value="3.45 A"/>
    <property type="chains" value="C=683-697"/>
</dbReference>
<dbReference type="PDB" id="5DSH">
    <property type="method" value="X-ray"/>
    <property type="resolution" value="2.95 A"/>
    <property type="chains" value="B=685-700"/>
</dbReference>
<dbReference type="PDB" id="5DV3">
    <property type="method" value="X-ray"/>
    <property type="resolution" value="2.75 A"/>
    <property type="chains" value="B=685-700"/>
</dbReference>
<dbReference type="PDB" id="5DV6">
    <property type="method" value="X-ray"/>
    <property type="resolution" value="2.80 A"/>
    <property type="chains" value="B=685-700"/>
</dbReference>
<dbReference type="PDB" id="5DV8">
    <property type="method" value="X-ray"/>
    <property type="resolution" value="2.75 A"/>
    <property type="chains" value="B=685-700"/>
</dbReference>
<dbReference type="PDB" id="5DVC">
    <property type="method" value="X-ray"/>
    <property type="resolution" value="2.30 A"/>
    <property type="chains" value="B=685-700"/>
</dbReference>
<dbReference type="PDB" id="5DWL">
    <property type="method" value="X-ray"/>
    <property type="resolution" value="2.20 A"/>
    <property type="chains" value="B=685-700"/>
</dbReference>
<dbReference type="PDB" id="5E7V">
    <property type="method" value="X-ray"/>
    <property type="resolution" value="2.40 A"/>
    <property type="chains" value="B=686-700"/>
</dbReference>
<dbReference type="PDB" id="5GTN">
    <property type="method" value="X-ray"/>
    <property type="resolution" value="1.85 A"/>
    <property type="chains" value="B=685-700"/>
</dbReference>
<dbReference type="PDB" id="5GTO">
    <property type="method" value="X-ray"/>
    <property type="resolution" value="2.10 A"/>
    <property type="chains" value="B=685-700"/>
</dbReference>
<dbReference type="PDB" id="5GTP">
    <property type="method" value="X-ray"/>
    <property type="resolution" value="2.35 A"/>
    <property type="chains" value="B=685-700"/>
</dbReference>
<dbReference type="PDB" id="5HJS">
    <property type="method" value="X-ray"/>
    <property type="resolution" value="1.72 A"/>
    <property type="chains" value="C/D=676-700"/>
</dbReference>
<dbReference type="PDB" id="5JI0">
    <property type="method" value="X-ray"/>
    <property type="resolution" value="1.98 A"/>
    <property type="chains" value="E/F=676-700"/>
</dbReference>
<dbReference type="PDB" id="5JMM">
    <property type="method" value="X-ray"/>
    <property type="resolution" value="2.10 A"/>
    <property type="chains" value="F/G=686-698"/>
</dbReference>
<dbReference type="PDB" id="5L7E">
    <property type="method" value="X-ray"/>
    <property type="resolution" value="1.86 A"/>
    <property type="chains" value="B=1432-1441"/>
</dbReference>
<dbReference type="PDB" id="5L7G">
    <property type="method" value="X-ray"/>
    <property type="resolution" value="2.01 A"/>
    <property type="chains" value="B=1432-1441"/>
</dbReference>
<dbReference type="PDB" id="5L7H">
    <property type="method" value="X-ray"/>
    <property type="resolution" value="1.84 A"/>
    <property type="chains" value="B=1432-1441"/>
</dbReference>
<dbReference type="PDB" id="5MWP">
    <property type="method" value="X-ray"/>
    <property type="resolution" value="1.82 A"/>
    <property type="chains" value="B=1427-1441"/>
</dbReference>
<dbReference type="PDB" id="5MWY">
    <property type="method" value="X-ray"/>
    <property type="resolution" value="1.75 A"/>
    <property type="chains" value="B=1427-1441"/>
</dbReference>
<dbReference type="PDB" id="5MX7">
    <property type="method" value="X-ray"/>
    <property type="resolution" value="1.98 A"/>
    <property type="chains" value="B1=686-700"/>
</dbReference>
<dbReference type="PDB" id="5NKY">
    <property type="method" value="X-ray"/>
    <property type="resolution" value="2.10 A"/>
    <property type="chains" value="B=686-700"/>
</dbReference>
<dbReference type="PDB" id="5NMA">
    <property type="method" value="X-ray"/>
    <property type="resolution" value="2.80 A"/>
    <property type="chains" value="B=686-700"/>
</dbReference>
<dbReference type="PDB" id="5NMB">
    <property type="method" value="X-ray"/>
    <property type="resolution" value="2.50 A"/>
    <property type="chains" value="B2=686-700"/>
</dbReference>
<dbReference type="PDB" id="5NWM">
    <property type="method" value="NMR"/>
    <property type="chains" value="A=257-385"/>
</dbReference>
<dbReference type="PDB" id="5OW7">
    <property type="method" value="X-ray"/>
    <property type="resolution" value="2.10 A"/>
    <property type="chains" value="B=686-700"/>
</dbReference>
<dbReference type="PDB" id="5OW9">
    <property type="method" value="X-ray"/>
    <property type="resolution" value="2.40 A"/>
    <property type="chains" value="B=686-700"/>
</dbReference>
<dbReference type="PDB" id="5OWD">
    <property type="method" value="X-ray"/>
    <property type="resolution" value="2.15 A"/>
    <property type="chains" value="B=686-700"/>
</dbReference>
<dbReference type="PDB" id="5Q0J">
    <property type="method" value="X-ray"/>
    <property type="resolution" value="2.00 A"/>
    <property type="chains" value="B/D=744-757"/>
</dbReference>
<dbReference type="PDB" id="5Q0K">
    <property type="method" value="X-ray"/>
    <property type="resolution" value="1.80 A"/>
    <property type="chains" value="B=744-757"/>
</dbReference>
<dbReference type="PDB" id="5Q0L">
    <property type="method" value="X-ray"/>
    <property type="resolution" value="2.50 A"/>
    <property type="chains" value="B/D=744-757"/>
</dbReference>
<dbReference type="PDB" id="5Q0M">
    <property type="method" value="X-ray"/>
    <property type="resolution" value="2.20 A"/>
    <property type="chains" value="B=744-757"/>
</dbReference>
<dbReference type="PDB" id="5Q0N">
    <property type="method" value="X-ray"/>
    <property type="resolution" value="2.40 A"/>
    <property type="chains" value="B/D=744-757"/>
</dbReference>
<dbReference type="PDB" id="5Q0O">
    <property type="method" value="X-ray"/>
    <property type="resolution" value="1.90 A"/>
    <property type="chains" value="B/D=744-757"/>
</dbReference>
<dbReference type="PDB" id="5Q0P">
    <property type="method" value="X-ray"/>
    <property type="resolution" value="1.80 A"/>
    <property type="chains" value="B/D=744-757"/>
</dbReference>
<dbReference type="PDB" id="5Q0Q">
    <property type="method" value="X-ray"/>
    <property type="resolution" value="2.60 A"/>
    <property type="chains" value="B/D=744-757"/>
</dbReference>
<dbReference type="PDB" id="5Q0R">
    <property type="method" value="X-ray"/>
    <property type="resolution" value="1.91 A"/>
    <property type="chains" value="B=744-757"/>
</dbReference>
<dbReference type="PDB" id="5Q0S">
    <property type="method" value="X-ray"/>
    <property type="resolution" value="2.50 A"/>
    <property type="chains" value="B/D=744-757"/>
</dbReference>
<dbReference type="PDB" id="5Q0T">
    <property type="method" value="X-ray"/>
    <property type="resolution" value="2.14 A"/>
    <property type="chains" value="B=744-757"/>
</dbReference>
<dbReference type="PDB" id="5Q0U">
    <property type="method" value="X-ray"/>
    <property type="resolution" value="1.90 A"/>
    <property type="chains" value="B/D=744-757"/>
</dbReference>
<dbReference type="PDB" id="5Q0V">
    <property type="method" value="X-ray"/>
    <property type="resolution" value="1.87 A"/>
    <property type="chains" value="B/D=744-757"/>
</dbReference>
<dbReference type="PDB" id="5Q0W">
    <property type="method" value="X-ray"/>
    <property type="resolution" value="1.90 A"/>
    <property type="chains" value="B=744-757"/>
</dbReference>
<dbReference type="PDB" id="5Q0X">
    <property type="method" value="X-ray"/>
    <property type="resolution" value="2.26 A"/>
    <property type="chains" value="B=744-757"/>
</dbReference>
<dbReference type="PDB" id="5Q0Y">
    <property type="method" value="X-ray"/>
    <property type="resolution" value="2.20 A"/>
    <property type="chains" value="B/D=744-757"/>
</dbReference>
<dbReference type="PDB" id="5Q0Z">
    <property type="method" value="X-ray"/>
    <property type="resolution" value="2.26 A"/>
    <property type="chains" value="B/D=744-757"/>
</dbReference>
<dbReference type="PDB" id="5Q10">
    <property type="method" value="X-ray"/>
    <property type="resolution" value="2.20 A"/>
    <property type="chains" value="B=744-757"/>
</dbReference>
<dbReference type="PDB" id="5Q11">
    <property type="method" value="X-ray"/>
    <property type="resolution" value="2.20 A"/>
    <property type="chains" value="B=744-757"/>
</dbReference>
<dbReference type="PDB" id="5Q12">
    <property type="method" value="X-ray"/>
    <property type="resolution" value="2.00 A"/>
    <property type="chains" value="B=744-757"/>
</dbReference>
<dbReference type="PDB" id="5Q13">
    <property type="method" value="X-ray"/>
    <property type="resolution" value="1.90 A"/>
    <property type="chains" value="B/D=744-757"/>
</dbReference>
<dbReference type="PDB" id="5Q14">
    <property type="method" value="X-ray"/>
    <property type="resolution" value="1.85 A"/>
    <property type="chains" value="B/D=744-757"/>
</dbReference>
<dbReference type="PDB" id="5Q15">
    <property type="method" value="X-ray"/>
    <property type="resolution" value="1.90 A"/>
    <property type="chains" value="B/D=744-757"/>
</dbReference>
<dbReference type="PDB" id="5Q16">
    <property type="method" value="X-ray"/>
    <property type="resolution" value="2.00 A"/>
    <property type="chains" value="B/D=744-757"/>
</dbReference>
<dbReference type="PDB" id="5Q18">
    <property type="method" value="X-ray"/>
    <property type="resolution" value="1.90 A"/>
    <property type="chains" value="B/D=744-757"/>
</dbReference>
<dbReference type="PDB" id="5Q19">
    <property type="method" value="X-ray"/>
    <property type="resolution" value="1.98 A"/>
    <property type="chains" value="B/D=744-757"/>
</dbReference>
<dbReference type="PDB" id="5Q1A">
    <property type="method" value="X-ray"/>
    <property type="resolution" value="2.00 A"/>
    <property type="chains" value="B/D=744-757"/>
</dbReference>
<dbReference type="PDB" id="5Q1B">
    <property type="method" value="X-ray"/>
    <property type="resolution" value="2.30 A"/>
    <property type="chains" value="B/D=744-757"/>
</dbReference>
<dbReference type="PDB" id="5Q1C">
    <property type="method" value="X-ray"/>
    <property type="resolution" value="2.30 A"/>
    <property type="chains" value="B/D=744-757"/>
</dbReference>
<dbReference type="PDB" id="5Q1D">
    <property type="method" value="X-ray"/>
    <property type="resolution" value="1.89 A"/>
    <property type="chains" value="B/D=744-757"/>
</dbReference>
<dbReference type="PDB" id="5Q1E">
    <property type="method" value="X-ray"/>
    <property type="resolution" value="1.85 A"/>
    <property type="chains" value="B=744-757"/>
</dbReference>
<dbReference type="PDB" id="5Q1F">
    <property type="method" value="X-ray"/>
    <property type="resolution" value="2.30 A"/>
    <property type="chains" value="B/D=744-757"/>
</dbReference>
<dbReference type="PDB" id="5Q1G">
    <property type="method" value="X-ray"/>
    <property type="resolution" value="2.00 A"/>
    <property type="chains" value="B=744-757"/>
</dbReference>
<dbReference type="PDB" id="5Q1H">
    <property type="method" value="X-ray"/>
    <property type="resolution" value="2.20 A"/>
    <property type="chains" value="B/D/F/H=744-757"/>
</dbReference>
<dbReference type="PDB" id="5Q1I">
    <property type="method" value="X-ray"/>
    <property type="resolution" value="1.95 A"/>
    <property type="chains" value="B=744-757"/>
</dbReference>
<dbReference type="PDB" id="5X0R">
    <property type="method" value="X-ray"/>
    <property type="resolution" value="2.67 A"/>
    <property type="chains" value="C/D=676-700"/>
</dbReference>
<dbReference type="PDB" id="5X8U">
    <property type="method" value="X-ray"/>
    <property type="resolution" value="2.00 A"/>
    <property type="chains" value="B=686-700"/>
</dbReference>
<dbReference type="PDB" id="5X8W">
    <property type="method" value="X-ray"/>
    <property type="resolution" value="2.30 A"/>
    <property type="chains" value="B=686-700"/>
</dbReference>
<dbReference type="PDB" id="5Y44">
    <property type="method" value="X-ray"/>
    <property type="resolution" value="2.35 A"/>
    <property type="chains" value="B=745-755"/>
</dbReference>
<dbReference type="PDB" id="5YCN">
    <property type="method" value="X-ray"/>
    <property type="resolution" value="2.15 A"/>
    <property type="chains" value="B=685-700"/>
</dbReference>
<dbReference type="PDB" id="5YCP">
    <property type="method" value="X-ray"/>
    <property type="resolution" value="2.00 A"/>
    <property type="chains" value="B=685-700"/>
</dbReference>
<dbReference type="PDB" id="5YP6">
    <property type="method" value="X-ray"/>
    <property type="resolution" value="2.20 A"/>
    <property type="chains" value="B=688-695"/>
</dbReference>
<dbReference type="PDB" id="6A5W">
    <property type="method" value="X-ray"/>
    <property type="resolution" value="2.88 A"/>
    <property type="chains" value="B/D=745-756"/>
</dbReference>
<dbReference type="PDB" id="6A5X">
    <property type="method" value="X-ray"/>
    <property type="resolution" value="2.60 A"/>
    <property type="chains" value="B=745-755"/>
</dbReference>
<dbReference type="PDB" id="6A5Y">
    <property type="method" value="X-ray"/>
    <property type="resolution" value="2.10 A"/>
    <property type="chains" value="B/F=685-700"/>
</dbReference>
<dbReference type="PDB" id="6A5Z">
    <property type="method" value="X-ray"/>
    <property type="resolution" value="2.95 A"/>
    <property type="chains" value="E/F/G/I=685-700"/>
</dbReference>
<dbReference type="PDB" id="6A60">
    <property type="method" value="X-ray"/>
    <property type="resolution" value="3.05 A"/>
    <property type="chains" value="B/F=685-700"/>
</dbReference>
<dbReference type="PDB" id="6BNS">
    <property type="method" value="X-ray"/>
    <property type="resolution" value="2.56 A"/>
    <property type="chains" value="A/B=678-710"/>
</dbReference>
<dbReference type="PDB" id="6E3G">
    <property type="method" value="X-ray"/>
    <property type="resolution" value="2.10 A"/>
    <property type="chains" value="C/D=688-695"/>
</dbReference>
<dbReference type="PDB" id="6FO7">
    <property type="method" value="X-ray"/>
    <property type="resolution" value="2.59 A"/>
    <property type="chains" value="B=686-700"/>
</dbReference>
<dbReference type="PDB" id="6FO8">
    <property type="method" value="X-ray"/>
    <property type="resolution" value="2.30 A"/>
    <property type="chains" value="B=686-700"/>
</dbReference>
<dbReference type="PDB" id="6FO9">
    <property type="method" value="X-ray"/>
    <property type="resolution" value="2.70 A"/>
    <property type="chains" value="B=686-700"/>
</dbReference>
<dbReference type="PDB" id="6FOB">
    <property type="method" value="X-ray"/>
    <property type="resolution" value="2.75 A"/>
    <property type="chains" value="B=686-700"/>
</dbReference>
<dbReference type="PDB" id="6FOD">
    <property type="method" value="X-ray"/>
    <property type="resolution" value="2.50 A"/>
    <property type="chains" value="B=686-700"/>
</dbReference>
<dbReference type="PDB" id="6GEV">
    <property type="method" value="X-ray"/>
    <property type="resolution" value="1.54 A"/>
    <property type="chains" value="B=1427-1441"/>
</dbReference>
<dbReference type="PDB" id="6GG8">
    <property type="method" value="X-ray"/>
    <property type="resolution" value="1.80 A"/>
    <property type="chains" value="B=1427-1441"/>
</dbReference>
<dbReference type="PDB" id="6HTY">
    <property type="method" value="X-ray"/>
    <property type="resolution" value="2.22 A"/>
    <property type="chains" value="A/B=678-700"/>
</dbReference>
<dbReference type="PDB" id="6ICJ">
    <property type="method" value="X-ray"/>
    <property type="resolution" value="2.48 A"/>
    <property type="chains" value="B=676-700"/>
</dbReference>
<dbReference type="PDB" id="6IJR">
    <property type="method" value="X-ray"/>
    <property type="resolution" value="2.85 A"/>
    <property type="chains" value="B/D=685-700"/>
</dbReference>
<dbReference type="PDB" id="6IJS">
    <property type="method" value="X-ray"/>
    <property type="resolution" value="2.15 A"/>
    <property type="chains" value="B=685-700"/>
</dbReference>
<dbReference type="PDB" id="6ILQ">
    <property type="method" value="X-ray"/>
    <property type="resolution" value="2.41 A"/>
    <property type="chains" value="B=676-700"/>
</dbReference>
<dbReference type="PDB" id="6ITM">
    <property type="method" value="X-ray"/>
    <property type="resolution" value="2.50 A"/>
    <property type="chains" value="B/D=744-757"/>
</dbReference>
<dbReference type="PDB" id="6JNR">
    <property type="method" value="X-ray"/>
    <property type="resolution" value="2.30 A"/>
    <property type="chains" value="C/D=687-698"/>
</dbReference>
<dbReference type="PDB" id="6JQ7">
    <property type="method" value="X-ray"/>
    <property type="resolution" value="2.55 A"/>
    <property type="chains" value="B=685-700"/>
</dbReference>
<dbReference type="PDB" id="6KTM">
    <property type="method" value="X-ray"/>
    <property type="resolution" value="2.70 A"/>
    <property type="chains" value="B=685-700"/>
</dbReference>
<dbReference type="PDB" id="6KTN">
    <property type="method" value="X-ray"/>
    <property type="resolution" value="2.75 A"/>
    <property type="chains" value="B=685-700"/>
</dbReference>
<dbReference type="PDB" id="6L6K">
    <property type="method" value="X-ray"/>
    <property type="resolution" value="1.80 A"/>
    <property type="chains" value="B=687-698"/>
</dbReference>
<dbReference type="PDB" id="6L96">
    <property type="method" value="X-ray"/>
    <property type="resolution" value="3.20 A"/>
    <property type="chains" value="C=686-698"/>
</dbReference>
<dbReference type="PDB" id="6NX1">
    <property type="method" value="X-ray"/>
    <property type="resolution" value="2.27 A"/>
    <property type="chains" value="A/B=678-710"/>
</dbReference>
<dbReference type="PDB" id="6P9F">
    <property type="method" value="X-ray"/>
    <property type="resolution" value="2.80 A"/>
    <property type="chains" value="A/B=683-696"/>
</dbReference>
<dbReference type="PDB" id="6SSQ">
    <property type="method" value="X-ray"/>
    <property type="resolution" value="2.30 A"/>
    <property type="chains" value="F/G=686-698"/>
</dbReference>
<dbReference type="PDB" id="6T2M">
    <property type="method" value="X-ray"/>
    <property type="resolution" value="3.00 A"/>
    <property type="chains" value="B=686-700"/>
</dbReference>
<dbReference type="PDB" id="6TFI">
    <property type="method" value="X-ray"/>
    <property type="resolution" value="1.85 A"/>
    <property type="chains" value="A/B=681-700"/>
</dbReference>
<dbReference type="PDB" id="6U25">
    <property type="method" value="X-ray"/>
    <property type="resolution" value="2.61 A"/>
    <property type="chains" value="A=683-696"/>
</dbReference>
<dbReference type="PDB" id="6W9H">
    <property type="method" value="X-ray"/>
    <property type="resolution" value="2.00 A"/>
    <property type="chains" value="A=683-696"/>
</dbReference>
<dbReference type="PDB" id="6W9I">
    <property type="method" value="X-ray"/>
    <property type="resolution" value="1.61 A"/>
    <property type="chains" value="A=683-696"/>
</dbReference>
<dbReference type="PDB" id="6XP9">
    <property type="method" value="X-ray"/>
    <property type="resolution" value="2.27 A"/>
    <property type="chains" value="A/B=678-710"/>
</dbReference>
<dbReference type="PDB" id="7AOS">
    <property type="method" value="X-ray"/>
    <property type="resolution" value="2.55 A"/>
    <property type="chains" value="C/D=686-712"/>
</dbReference>
<dbReference type="PDB" id="7B39">
    <property type="method" value="X-ray"/>
    <property type="resolution" value="2.13 A"/>
    <property type="chains" value="B=686-700"/>
</dbReference>
<dbReference type="PDB" id="7BNS">
    <property type="method" value="X-ray"/>
    <property type="resolution" value="2.70 A"/>
    <property type="chains" value="B2=686-700"/>
</dbReference>
<dbReference type="PDB" id="7BNU">
    <property type="method" value="X-ray"/>
    <property type="resolution" value="2.40 A"/>
    <property type="chains" value="B2=686-700"/>
</dbReference>
<dbReference type="PDB" id="7BO6">
    <property type="method" value="X-ray"/>
    <property type="resolution" value="2.86 A"/>
    <property type="chains" value="B=686-700"/>
</dbReference>
<dbReference type="PDB" id="7BPY">
    <property type="method" value="X-ray"/>
    <property type="resolution" value="2.09 A"/>
    <property type="chains" value="B/D=683-697"/>
</dbReference>
<dbReference type="PDB" id="7BPZ">
    <property type="method" value="X-ray"/>
    <property type="resolution" value="2.43 A"/>
    <property type="chains" value="B/D=683-697"/>
</dbReference>
<dbReference type="PDB" id="7BQ0">
    <property type="method" value="X-ray"/>
    <property type="resolution" value="1.77 A"/>
    <property type="chains" value="B/D=683-697"/>
</dbReference>
<dbReference type="PDB" id="7BQ1">
    <property type="method" value="X-ray"/>
    <property type="resolution" value="1.52 A"/>
    <property type="chains" value="B=683-697"/>
</dbReference>
<dbReference type="PDB" id="7BQ2">
    <property type="method" value="X-ray"/>
    <property type="resolution" value="1.52 A"/>
    <property type="chains" value="B=683-697"/>
</dbReference>
<dbReference type="PDB" id="7BQ3">
    <property type="method" value="X-ray"/>
    <property type="resolution" value="1.98 A"/>
    <property type="chains" value="B=683-697"/>
</dbReference>
<dbReference type="PDB" id="7BQ4">
    <property type="method" value="X-ray"/>
    <property type="resolution" value="1.62 A"/>
    <property type="chains" value="B=683-697"/>
</dbReference>
<dbReference type="PDB" id="7C6Q">
    <property type="method" value="X-ray"/>
    <property type="resolution" value="2.76 A"/>
    <property type="chains" value="B=682-699"/>
</dbReference>
<dbReference type="PDB" id="7CXF">
    <property type="method" value="X-ray"/>
    <property type="resolution" value="2.35 A"/>
    <property type="chains" value="B=685-700"/>
</dbReference>
<dbReference type="PDB" id="7CXH">
    <property type="method" value="X-ray"/>
    <property type="resolution" value="2.30 A"/>
    <property type="chains" value="B=685-700"/>
</dbReference>
<dbReference type="PDB" id="7CXI">
    <property type="method" value="X-ray"/>
    <property type="resolution" value="2.30 A"/>
    <property type="chains" value="B=685-700"/>
</dbReference>
<dbReference type="PDB" id="7CXJ">
    <property type="method" value="X-ray"/>
    <property type="resolution" value="2.65 A"/>
    <property type="chains" value="B=685-700"/>
</dbReference>
<dbReference type="PDB" id="7CXK">
    <property type="method" value="X-ray"/>
    <property type="resolution" value="2.20 A"/>
    <property type="chains" value="B=685-700"/>
</dbReference>
<dbReference type="PDB" id="7CXL">
    <property type="method" value="X-ray"/>
    <property type="resolution" value="2.70 A"/>
    <property type="chains" value="B=685-700"/>
</dbReference>
<dbReference type="PDB" id="7JYM">
    <property type="method" value="X-ray"/>
    <property type="resolution" value="3.05 A"/>
    <property type="chains" value="A=683-696"/>
</dbReference>
<dbReference type="PDB" id="7KXD">
    <property type="method" value="X-ray"/>
    <property type="resolution" value="1.62 A"/>
    <property type="chains" value="A=683-696"/>
</dbReference>
<dbReference type="PDB" id="7KXE">
    <property type="method" value="X-ray"/>
    <property type="resolution" value="2.42 A"/>
    <property type="chains" value="A=683-696"/>
</dbReference>
<dbReference type="PDB" id="7KXF">
    <property type="method" value="X-ray"/>
    <property type="resolution" value="2.14 A"/>
    <property type="chains" value="A=683-696"/>
</dbReference>
<dbReference type="PDB" id="7OXZ">
    <property type="method" value="X-ray"/>
    <property type="resolution" value="2.20 A"/>
    <property type="chains" value="B=686-700"/>
</dbReference>
<dbReference type="PDB" id="7OY4">
    <property type="method" value="X-ray"/>
    <property type="resolution" value="2.00 A"/>
    <property type="chains" value="B=686-700"/>
</dbReference>
<dbReference type="PDB" id="7QPI">
    <property type="method" value="X-ray"/>
    <property type="resolution" value="2.50 A"/>
    <property type="chains" value="U=686-698"/>
</dbReference>
<dbReference type="PDB" id="7TRB">
    <property type="method" value="X-ray"/>
    <property type="resolution" value="2.15 A"/>
    <property type="chains" value="C/D=744-757"/>
</dbReference>
<dbReference type="PDB" id="7WGO">
    <property type="method" value="X-ray"/>
    <property type="resolution" value="2.36 A"/>
    <property type="chains" value="B=683-697"/>
</dbReference>
<dbReference type="PDB" id="7WGP">
    <property type="method" value="X-ray"/>
    <property type="resolution" value="2.53 A"/>
    <property type="chains" value="B=683-697"/>
</dbReference>
<dbReference type="PDB" id="7WGQ">
    <property type="method" value="X-ray"/>
    <property type="resolution" value="2.43 A"/>
    <property type="chains" value="B=683-697"/>
</dbReference>
<dbReference type="PDB" id="7WQQ">
    <property type="method" value="X-ray"/>
    <property type="resolution" value="1.90 A"/>
    <property type="chains" value="C=686-698"/>
</dbReference>
<dbReference type="PDB" id="7XVY">
    <property type="method" value="X-ray"/>
    <property type="resolution" value="1.54 A"/>
    <property type="chains" value="C/D=628-640"/>
</dbReference>
<dbReference type="PDB" id="7XVZ">
    <property type="method" value="X-ray"/>
    <property type="resolution" value="2.08 A"/>
    <property type="chains" value="C/D=630-640"/>
</dbReference>
<dbReference type="PDB" id="7XWP">
    <property type="method" value="X-ray"/>
    <property type="resolution" value="1.92 A"/>
    <property type="chains" value="C/D=630-640"/>
</dbReference>
<dbReference type="PDB" id="7XWQ">
    <property type="method" value="X-ray"/>
    <property type="resolution" value="1.89 A"/>
    <property type="chains" value="C/D=630-640"/>
</dbReference>
<dbReference type="PDB" id="7XWR">
    <property type="method" value="X-ray"/>
    <property type="resolution" value="2.16 A"/>
    <property type="chains" value="C/D=630-640"/>
</dbReference>
<dbReference type="PDB" id="7Y8F">
    <property type="method" value="X-ray"/>
    <property type="resolution" value="2.22 A"/>
    <property type="chains" value="C/D=689-695"/>
</dbReference>
<dbReference type="PDB" id="7Y8G">
    <property type="method" value="X-ray"/>
    <property type="resolution" value="2.14 A"/>
    <property type="chains" value="C/D=689-695"/>
</dbReference>
<dbReference type="PDB" id="7YFK">
    <property type="method" value="X-ray"/>
    <property type="resolution" value="2.10 A"/>
    <property type="chains" value="A/B=676-700"/>
</dbReference>
<dbReference type="PDB" id="7ZFG">
    <property type="method" value="X-ray"/>
    <property type="resolution" value="2.62 A"/>
    <property type="chains" value="B=686-700"/>
</dbReference>
<dbReference type="PDB" id="7ZFX">
    <property type="method" value="X-ray"/>
    <property type="resolution" value="2.60 A"/>
    <property type="chains" value="B=686-700"/>
</dbReference>
<dbReference type="PDB" id="8CK5">
    <property type="method" value="X-ray"/>
    <property type="resolution" value="2.10 A"/>
    <property type="chains" value="B=686-700"/>
</dbReference>
<dbReference type="PDB" id="8CKC">
    <property type="method" value="X-ray"/>
    <property type="resolution" value="2.10 A"/>
    <property type="chains" value="B=686-700"/>
</dbReference>
<dbReference type="PDB" id="8F5Y">
    <property type="method" value="X-ray"/>
    <property type="resolution" value="2.15 A"/>
    <property type="chains" value="C/D=676-700"/>
</dbReference>
<dbReference type="PDB" id="8HUK">
    <property type="method" value="X-ray"/>
    <property type="resolution" value="2.98 A"/>
    <property type="chains" value="B=683-697"/>
</dbReference>
<dbReference type="PDB" id="8HUM">
    <property type="method" value="X-ray"/>
    <property type="resolution" value="2.29 A"/>
    <property type="chains" value="B=683-697"/>
</dbReference>
<dbReference type="PDB" id="8HUP">
    <property type="method" value="X-ray"/>
    <property type="resolution" value="2.36 A"/>
    <property type="chains" value="B=683-697"/>
</dbReference>
<dbReference type="PDB" id="8HUQ">
    <property type="method" value="X-ray"/>
    <property type="resolution" value="1.65 A"/>
    <property type="chains" value="B=683-697"/>
</dbReference>
<dbReference type="PDB" id="8P9W">
    <property type="method" value="X-ray"/>
    <property type="resolution" value="2.90 A"/>
    <property type="chains" value="B=686-700"/>
</dbReference>
<dbReference type="PDB" id="8SVN">
    <property type="method" value="X-ray"/>
    <property type="resolution" value="2.20 A"/>
    <property type="chains" value="A/B=678-710"/>
</dbReference>
<dbReference type="PDB" id="8SVO">
    <property type="method" value="X-ray"/>
    <property type="resolution" value="2.35 A"/>
    <property type="chains" value="A/B=678-710"/>
</dbReference>
<dbReference type="PDB" id="8SVP">
    <property type="method" value="X-ray"/>
    <property type="resolution" value="3.32 A"/>
    <property type="chains" value="A/B=678-710"/>
</dbReference>
<dbReference type="PDB" id="8SVQ">
    <property type="method" value="X-ray"/>
    <property type="resolution" value="2.75 A"/>
    <property type="chains" value="A/B=678-710"/>
</dbReference>
<dbReference type="PDB" id="8SVR">
    <property type="method" value="X-ray"/>
    <property type="resolution" value="2.92 A"/>
    <property type="chains" value="A/B=678-710"/>
</dbReference>
<dbReference type="PDB" id="8SVS">
    <property type="method" value="X-ray"/>
    <property type="resolution" value="2.68 A"/>
    <property type="chains" value="A/B=678-710"/>
</dbReference>
<dbReference type="PDB" id="8SVT">
    <property type="method" value="X-ray"/>
    <property type="resolution" value="2.39 A"/>
    <property type="chains" value="A/B=678-710"/>
</dbReference>
<dbReference type="PDB" id="8SVU">
    <property type="method" value="X-ray"/>
    <property type="resolution" value="2.89 A"/>
    <property type="chains" value="A/B=678-710"/>
</dbReference>
<dbReference type="PDB" id="8SVX">
    <property type="method" value="X-ray"/>
    <property type="resolution" value="2.14 A"/>
    <property type="chains" value="A/B=678-710"/>
</dbReference>
<dbReference type="PDB" id="9EYR">
    <property type="method" value="X-ray"/>
    <property type="resolution" value="2.56 A"/>
    <property type="chains" value="B=686-700"/>
</dbReference>
<dbReference type="PDB" id="9FBF">
    <property type="method" value="X-ray"/>
    <property type="resolution" value="3.01 A"/>
    <property type="chains" value="B=686-700"/>
</dbReference>
<dbReference type="PDB" id="9FZI">
    <property type="method" value="X-ray"/>
    <property type="resolution" value="2.70 A"/>
    <property type="chains" value="A/B=678-700"/>
</dbReference>
<dbReference type="PDBsum" id="1FM6"/>
<dbReference type="PDBsum" id="1FM9"/>
<dbReference type="PDBsum" id="1K4W"/>
<dbReference type="PDBsum" id="1K74"/>
<dbReference type="PDBsum" id="1K7L"/>
<dbReference type="PDBsum" id="1KV6"/>
<dbReference type="PDBsum" id="1N4H"/>
<dbReference type="PDBsum" id="1NQ7"/>
<dbReference type="PDBsum" id="1NRL"/>
<dbReference type="PDBsum" id="1P8D"/>
<dbReference type="PDBsum" id="1PZL"/>
<dbReference type="PDBsum" id="1RDT"/>
<dbReference type="PDBsum" id="1TFC"/>
<dbReference type="PDBsum" id="1U3R"/>
<dbReference type="PDBsum" id="1U3S"/>
<dbReference type="PDBsum" id="1X76"/>
<dbReference type="PDBsum" id="1X78"/>
<dbReference type="PDBsum" id="1X7B"/>
<dbReference type="PDBsum" id="1X7J"/>
<dbReference type="PDBsum" id="1XIU"/>
<dbReference type="PDBsum" id="1XV9"/>
<dbReference type="PDBsum" id="1XVP"/>
<dbReference type="PDBsum" id="1YY4"/>
<dbReference type="PDBsum" id="1YYE"/>
<dbReference type="PDBsum" id="1ZAF"/>
<dbReference type="PDBsum" id="2A3I"/>
<dbReference type="PDBsum" id="2C52"/>
<dbReference type="PDBsum" id="2FVJ"/>
<dbReference type="PDBsum" id="2GTK"/>
<dbReference type="PDBsum" id="2HBH"/>
<dbReference type="PDBsum" id="2HC4"/>
<dbReference type="PDBsum" id="2HCD"/>
<dbReference type="PDBsum" id="2HFP"/>
<dbReference type="PDBsum" id="2NPA"/>
<dbReference type="PDBsum" id="2NV7"/>
<dbReference type="PDBsum" id="2P54"/>
<dbReference type="PDBsum" id="2PRG"/>
<dbReference type="PDBsum" id="3BEJ"/>
<dbReference type="PDBsum" id="3BQD"/>
<dbReference type="PDBsum" id="3CTB"/>
<dbReference type="PDBsum" id="3CWD"/>
<dbReference type="PDBsum" id="3DCT"/>
<dbReference type="PDBsum" id="3DCU"/>
<dbReference type="PDBsum" id="3DR1"/>
<dbReference type="PDBsum" id="3ET1"/>
<dbReference type="PDBsum" id="3ET3"/>
<dbReference type="PDBsum" id="3FEI"/>
<dbReference type="PDBsum" id="3FEJ"/>
<dbReference type="PDBsum" id="3FUR"/>
<dbReference type="PDBsum" id="3FXV"/>
<dbReference type="PDBsum" id="3G8I"/>
<dbReference type="PDBsum" id="3G9E"/>
<dbReference type="PDBsum" id="3GYT"/>
<dbReference type="PDBsum" id="3GYU"/>
<dbReference type="PDBsum" id="3H0A"/>
<dbReference type="PDBsum" id="3HC5"/>
<dbReference type="PDBsum" id="3HC6"/>
<dbReference type="PDBsum" id="3HVL"/>
<dbReference type="PDBsum" id="3IPQ"/>
<dbReference type="PDBsum" id="3IPS"/>
<dbReference type="PDBsum" id="3IPU"/>
<dbReference type="PDBsum" id="3KMR"/>
<dbReference type="PDBsum" id="3LMP"/>
<dbReference type="PDBsum" id="3OKH"/>
<dbReference type="PDBsum" id="3OKI"/>
<dbReference type="PDBsum" id="3OLF"/>
<dbReference type="PDBsum" id="3OLL"/>
<dbReference type="PDBsum" id="3OLS"/>
<dbReference type="PDBsum" id="3OMK"/>
<dbReference type="PDBsum" id="3OMM"/>
<dbReference type="PDBsum" id="3OMO"/>
<dbReference type="PDBsum" id="3OMP"/>
<dbReference type="PDBsum" id="3OMQ"/>
<dbReference type="PDBsum" id="3OOF"/>
<dbReference type="PDBsum" id="3OOK"/>
<dbReference type="PDBsum" id="3P88"/>
<dbReference type="PDBsum" id="3P89"/>
<dbReference type="PDBsum" id="3QT0"/>
<dbReference type="PDBsum" id="3RUT"/>
<dbReference type="PDBsum" id="3RUU"/>
<dbReference type="PDBsum" id="3RVF"/>
<dbReference type="PDBsum" id="3S9S"/>
<dbReference type="PDBsum" id="3T03"/>
<dbReference type="PDBsum" id="3UU7"/>
<dbReference type="PDBsum" id="3UUA"/>
<dbReference type="PDBsum" id="3UUD"/>
<dbReference type="PDBsum" id="3V9Y"/>
<dbReference type="PDBsum" id="3VN2"/>
<dbReference type="PDBsum" id="4DK7"/>
<dbReference type="PDBsum" id="4DK8"/>
<dbReference type="PDBsum" id="4DM6"/>
<dbReference type="PDBsum" id="4DM8"/>
<dbReference type="PDBsum" id="4DQM"/>
<dbReference type="PDBsum" id="4F9M"/>
<dbReference type="PDBsum" id="4FGY"/>
<dbReference type="PDBsum" id="4G1D"/>
<dbReference type="PDBsum" id="4G1Y"/>
<dbReference type="PDBsum" id="4G1Z"/>
<dbReference type="PDBsum" id="4G20"/>
<dbReference type="PDBsum" id="4G21"/>
<dbReference type="PDBsum" id="4G2H"/>
<dbReference type="PDBsum" id="4HEE"/>
<dbReference type="PDBsum" id="4J5X"/>
<dbReference type="PDBsum" id="4JYG"/>
<dbReference type="PDBsum" id="4JYH"/>
<dbReference type="PDBsum" id="4JYI"/>
<dbReference type="PDBsum" id="4MG5"/>
<dbReference type="PDBsum" id="4MG6"/>
<dbReference type="PDBsum" id="4MG7"/>
<dbReference type="PDBsum" id="4MG8"/>
<dbReference type="PDBsum" id="4MG9"/>
<dbReference type="PDBsum" id="4MGA"/>
<dbReference type="PDBsum" id="4MGB"/>
<dbReference type="PDBsum" id="4MGC"/>
<dbReference type="PDBsum" id="4MGD"/>
<dbReference type="PDBsum" id="4RUJ"/>
<dbReference type="PDBsum" id="4RUP"/>
<dbReference type="PDBsum" id="4TUZ"/>
<dbReference type="PDBsum" id="4TV1"/>
<dbReference type="PDBsum" id="4UDA"/>
<dbReference type="PDBsum" id="4UDB"/>
<dbReference type="PDBsum" id="4Y29"/>
<dbReference type="PDBsum" id="5A86"/>
<dbReference type="PDBsum" id="5AVI"/>
<dbReference type="PDBsum" id="5AVL"/>
<dbReference type="PDBsum" id="5AZT"/>
<dbReference type="PDBsum" id="5DSH"/>
<dbReference type="PDBsum" id="5DV3"/>
<dbReference type="PDBsum" id="5DV6"/>
<dbReference type="PDBsum" id="5DV8"/>
<dbReference type="PDBsum" id="5DVC"/>
<dbReference type="PDBsum" id="5DWL"/>
<dbReference type="PDBsum" id="5E7V"/>
<dbReference type="PDBsum" id="5GTN"/>
<dbReference type="PDBsum" id="5GTO"/>
<dbReference type="PDBsum" id="5GTP"/>
<dbReference type="PDBsum" id="5HJS"/>
<dbReference type="PDBsum" id="5JI0"/>
<dbReference type="PDBsum" id="5JMM"/>
<dbReference type="PDBsum" id="5L7E"/>
<dbReference type="PDBsum" id="5L7G"/>
<dbReference type="PDBsum" id="5L7H"/>
<dbReference type="PDBsum" id="5MWP"/>
<dbReference type="PDBsum" id="5MWY"/>
<dbReference type="PDBsum" id="5MX7"/>
<dbReference type="PDBsum" id="5NKY"/>
<dbReference type="PDBsum" id="5NMA"/>
<dbReference type="PDBsum" id="5NMB"/>
<dbReference type="PDBsum" id="5NWM"/>
<dbReference type="PDBsum" id="5OW7"/>
<dbReference type="PDBsum" id="5OW9"/>
<dbReference type="PDBsum" id="5OWD"/>
<dbReference type="PDBsum" id="5Q0J"/>
<dbReference type="PDBsum" id="5Q0K"/>
<dbReference type="PDBsum" id="5Q0L"/>
<dbReference type="PDBsum" id="5Q0M"/>
<dbReference type="PDBsum" id="5Q0N"/>
<dbReference type="PDBsum" id="5Q0O"/>
<dbReference type="PDBsum" id="5Q0P"/>
<dbReference type="PDBsum" id="5Q0Q"/>
<dbReference type="PDBsum" id="5Q0R"/>
<dbReference type="PDBsum" id="5Q0S"/>
<dbReference type="PDBsum" id="5Q0T"/>
<dbReference type="PDBsum" id="5Q0U"/>
<dbReference type="PDBsum" id="5Q0V"/>
<dbReference type="PDBsum" id="5Q0W"/>
<dbReference type="PDBsum" id="5Q0X"/>
<dbReference type="PDBsum" id="5Q0Y"/>
<dbReference type="PDBsum" id="5Q0Z"/>
<dbReference type="PDBsum" id="5Q10"/>
<dbReference type="PDBsum" id="5Q11"/>
<dbReference type="PDBsum" id="5Q12"/>
<dbReference type="PDBsum" id="5Q13"/>
<dbReference type="PDBsum" id="5Q14"/>
<dbReference type="PDBsum" id="5Q15"/>
<dbReference type="PDBsum" id="5Q16"/>
<dbReference type="PDBsum" id="5Q18"/>
<dbReference type="PDBsum" id="5Q19"/>
<dbReference type="PDBsum" id="5Q1A"/>
<dbReference type="PDBsum" id="5Q1B"/>
<dbReference type="PDBsum" id="5Q1C"/>
<dbReference type="PDBsum" id="5Q1D"/>
<dbReference type="PDBsum" id="5Q1E"/>
<dbReference type="PDBsum" id="5Q1F"/>
<dbReference type="PDBsum" id="5Q1G"/>
<dbReference type="PDBsum" id="5Q1H"/>
<dbReference type="PDBsum" id="5Q1I"/>
<dbReference type="PDBsum" id="5X0R"/>
<dbReference type="PDBsum" id="5X8U"/>
<dbReference type="PDBsum" id="5X8W"/>
<dbReference type="PDBsum" id="5Y44"/>
<dbReference type="PDBsum" id="5YCN"/>
<dbReference type="PDBsum" id="5YCP"/>
<dbReference type="PDBsum" id="5YP6"/>
<dbReference type="PDBsum" id="6A5W"/>
<dbReference type="PDBsum" id="6A5X"/>
<dbReference type="PDBsum" id="6A5Y"/>
<dbReference type="PDBsum" id="6A5Z"/>
<dbReference type="PDBsum" id="6A60"/>
<dbReference type="PDBsum" id="6BNS"/>
<dbReference type="PDBsum" id="6E3G"/>
<dbReference type="PDBsum" id="6FO7"/>
<dbReference type="PDBsum" id="6FO8"/>
<dbReference type="PDBsum" id="6FO9"/>
<dbReference type="PDBsum" id="6FOB"/>
<dbReference type="PDBsum" id="6FOD"/>
<dbReference type="PDBsum" id="6GEV"/>
<dbReference type="PDBsum" id="6GG8"/>
<dbReference type="PDBsum" id="6HTY"/>
<dbReference type="PDBsum" id="6ICJ"/>
<dbReference type="PDBsum" id="6IJR"/>
<dbReference type="PDBsum" id="6IJS"/>
<dbReference type="PDBsum" id="6ILQ"/>
<dbReference type="PDBsum" id="6ITM"/>
<dbReference type="PDBsum" id="6JNR"/>
<dbReference type="PDBsum" id="6JQ7"/>
<dbReference type="PDBsum" id="6KTM"/>
<dbReference type="PDBsum" id="6KTN"/>
<dbReference type="PDBsum" id="6L6K"/>
<dbReference type="PDBsum" id="6L96"/>
<dbReference type="PDBsum" id="6NX1"/>
<dbReference type="PDBsum" id="6P9F"/>
<dbReference type="PDBsum" id="6SSQ"/>
<dbReference type="PDBsum" id="6T2M"/>
<dbReference type="PDBsum" id="6TFI"/>
<dbReference type="PDBsum" id="6U25"/>
<dbReference type="PDBsum" id="6W9H"/>
<dbReference type="PDBsum" id="6W9I"/>
<dbReference type="PDBsum" id="6XP9"/>
<dbReference type="PDBsum" id="7AOS"/>
<dbReference type="PDBsum" id="7B39"/>
<dbReference type="PDBsum" id="7BNS"/>
<dbReference type="PDBsum" id="7BNU"/>
<dbReference type="PDBsum" id="7BO6"/>
<dbReference type="PDBsum" id="7BPY"/>
<dbReference type="PDBsum" id="7BPZ"/>
<dbReference type="PDBsum" id="7BQ0"/>
<dbReference type="PDBsum" id="7BQ1"/>
<dbReference type="PDBsum" id="7BQ2"/>
<dbReference type="PDBsum" id="7BQ3"/>
<dbReference type="PDBsum" id="7BQ4"/>
<dbReference type="PDBsum" id="7C6Q"/>
<dbReference type="PDBsum" id="7CXF"/>
<dbReference type="PDBsum" id="7CXH"/>
<dbReference type="PDBsum" id="7CXI"/>
<dbReference type="PDBsum" id="7CXJ"/>
<dbReference type="PDBsum" id="7CXK"/>
<dbReference type="PDBsum" id="7CXL"/>
<dbReference type="PDBsum" id="7JYM"/>
<dbReference type="PDBsum" id="7KXD"/>
<dbReference type="PDBsum" id="7KXE"/>
<dbReference type="PDBsum" id="7KXF"/>
<dbReference type="PDBsum" id="7OXZ"/>
<dbReference type="PDBsum" id="7OY4"/>
<dbReference type="PDBsum" id="7QPI"/>
<dbReference type="PDBsum" id="7TRB"/>
<dbReference type="PDBsum" id="7WGO"/>
<dbReference type="PDBsum" id="7WGP"/>
<dbReference type="PDBsum" id="7WGQ"/>
<dbReference type="PDBsum" id="7WQQ"/>
<dbReference type="PDBsum" id="7XVY"/>
<dbReference type="PDBsum" id="7XVZ"/>
<dbReference type="PDBsum" id="7XWP"/>
<dbReference type="PDBsum" id="7XWQ"/>
<dbReference type="PDBsum" id="7XWR"/>
<dbReference type="PDBsum" id="7Y8F"/>
<dbReference type="PDBsum" id="7Y8G"/>
<dbReference type="PDBsum" id="7YFK"/>
<dbReference type="PDBsum" id="7ZFG"/>
<dbReference type="PDBsum" id="7ZFX"/>
<dbReference type="PDBsum" id="8CK5"/>
<dbReference type="PDBsum" id="8CKC"/>
<dbReference type="PDBsum" id="8F5Y"/>
<dbReference type="PDBsum" id="8HUK"/>
<dbReference type="PDBsum" id="8HUM"/>
<dbReference type="PDBsum" id="8HUP"/>
<dbReference type="PDBsum" id="8HUQ"/>
<dbReference type="PDBsum" id="8P9W"/>
<dbReference type="PDBsum" id="8SVN"/>
<dbReference type="PDBsum" id="8SVO"/>
<dbReference type="PDBsum" id="8SVP"/>
<dbReference type="PDBsum" id="8SVQ"/>
<dbReference type="PDBsum" id="8SVR"/>
<dbReference type="PDBsum" id="8SVS"/>
<dbReference type="PDBsum" id="8SVT"/>
<dbReference type="PDBsum" id="8SVU"/>
<dbReference type="PDBsum" id="8SVX"/>
<dbReference type="PDBsum" id="9EYR"/>
<dbReference type="PDBsum" id="9FBF"/>
<dbReference type="PDBsum" id="9FZI"/>
<dbReference type="SMR" id="Q15788"/>
<dbReference type="BioGRID" id="114200">
    <property type="interactions" value="141"/>
</dbReference>
<dbReference type="ComplexPortal" id="CPX-517">
    <property type="entry name" value="PXR-NCOA1 activated nuclear receptor complex"/>
</dbReference>
<dbReference type="ComplexPortal" id="CPX-525">
    <property type="entry name" value="RARalpha-NCOA1 activated retinoic acid receptor complex"/>
</dbReference>
<dbReference type="ComplexPortal" id="CPX-5342">
    <property type="entry name" value="RXRalpha-NCOA1 activated retinoic acid receptor complex"/>
</dbReference>
<dbReference type="ComplexPortal" id="CPX-711">
    <property type="entry name" value="PPARgamma-NCOA1 activated nuclear receptor complex"/>
</dbReference>
<dbReference type="CORUM" id="Q15788"/>
<dbReference type="DIP" id="DIP-30877N"/>
<dbReference type="FunCoup" id="Q15788">
    <property type="interactions" value="2349"/>
</dbReference>
<dbReference type="IntAct" id="Q15788">
    <property type="interactions" value="62"/>
</dbReference>
<dbReference type="MINT" id="Q15788"/>
<dbReference type="STRING" id="9606.ENSP00000385216"/>
<dbReference type="BindingDB" id="Q15788"/>
<dbReference type="ChEMBL" id="CHEMBL1615387"/>
<dbReference type="DrugBank" id="DB07530">
    <property type="generic name" value="(1R,3R)-5-[(2E)-3-{(1S,3R)-2,2,3-trimethyl-3-[6,6,6-trifluoro-5-hydroxy-5-(trifluoromethyl)hex-3-yn-1-yl]cyclopentyl}prop-2-en-1-ylidene]cyclohexane-1,3-diol"/>
</dbReference>
<dbReference type="DrugBank" id="DB06908">
    <property type="generic name" value="(2S)-3-(1-{[2-(2-CHLOROPHENYL)-5-METHYL-1,3-OXAZOL-4-YL]METHYL}-1H-INDOL-5-YL)-2-ETHOXYPROPANOIC ACID"/>
</dbReference>
<dbReference type="DrugBank" id="DB08220">
    <property type="generic name" value="(8alpha,10alpha,13alpha,17beta)-17-[(4-hydroxyphenyl)carbonyl]androsta-3,5-diene-3-carboxylic acid"/>
</dbReference>
<dbReference type="DrugBank" id="DB08742">
    <property type="generic name" value="1,3-CYCLOHEXANEDIOL, 4-METHYLENE-5-[(2E)-[(1S,3AS,7AS)-OCTAHYDRO-1-(5-HYDROXY-5-METHYL-1,3-HEXADIYNYL)-7A-METHYL-4H-INDEN-4-YLIDENE]ETHYLIDENE]-, (1R,3S,5Z)"/>
</dbReference>
<dbReference type="DrugBank" id="DB07119">
    <property type="generic name" value="1-CHLORO-6-(4-HYDROXYPHENYL)-2-NAPHTHOL"/>
</dbReference>
<dbReference type="DrugBank" id="DB07009">
    <property type="generic name" value="2-(5-HYDROXY-NAPHTHALEN-1-YL)-1,3-BENZOOXAZOL-6-OL"/>
</dbReference>
<dbReference type="DrugBank" id="DB07557">
    <property type="generic name" value="3,20-Pregnanedione"/>
</dbReference>
<dbReference type="DrugBank" id="DB07236">
    <property type="generic name" value="3-(6-HYDROXY-NAPHTHALEN-2-YL)-BENZO[D]ISOOXAZOL-6-OL"/>
</dbReference>
<dbReference type="DrugBank" id="DB07230">
    <property type="generic name" value="3-BROMO-6-HYDROXY-2-(4-HYDROXYPHENYL)-1H-INDEN-1-ONE"/>
</dbReference>
<dbReference type="DrugBank" id="DB07150">
    <property type="generic name" value="4-(4-HYDROXYPHENYL)-1-NAPHTHALDEHYDE OXIME"/>
</dbReference>
<dbReference type="DrugBank" id="DB07198">
    <property type="generic name" value="5-HYDROXY-2-(4-HYDROXYPHENYL)-1-BENZOFURAN-7-CARBONITRILE"/>
</dbReference>
<dbReference type="DrugBank" id="DB06927">
    <property type="generic name" value="[5-HYDROXY-2-(4-HYDROXYPHENYL)-1-BENZOFURAN-7-YL]ACETONITRILE"/>
</dbReference>
<dbReference type="DrugBank" id="DB08915">
    <property type="generic name" value="Aleglitazar"/>
</dbReference>
<dbReference type="DrugBank" id="DB04652">
    <property type="generic name" value="Corticosterone"/>
</dbReference>
<dbReference type="DrugBank" id="DB06875">
    <property type="generic name" value="ERB-196"/>
</dbReference>
<dbReference type="DrugBank" id="DB01645">
    <property type="generic name" value="Genistein"/>
</dbReference>
<dbReference type="DrugBank" id="DB07215">
    <property type="generic name" value="GW-590735"/>
</dbReference>
<dbReference type="DrugBank" id="DB07724">
    <property type="generic name" value="Indeglitazar"/>
</dbReference>
<dbReference type="DrugBank" id="DB08231">
    <property type="generic name" value="Myristic acid"/>
</dbReference>
<dbReference type="DrugBank" id="DB06832">
    <property type="generic name" value="Prinaberel"/>
</dbReference>
<dbReference type="DrugBank" id="DB07080">
    <property type="generic name" value="TO-901317"/>
</dbReference>
<dbReference type="GuidetoPHARMACOLOGY" id="2693"/>
<dbReference type="GlyCosmos" id="Q15788">
    <property type="glycosylation" value="4 sites, 1 glycan"/>
</dbReference>
<dbReference type="GlyGen" id="Q15788">
    <property type="glycosylation" value="7 sites, 1 O-linked glycan (5 sites)"/>
</dbReference>
<dbReference type="iPTMnet" id="Q15788"/>
<dbReference type="PhosphoSitePlus" id="Q15788"/>
<dbReference type="BioMuta" id="NCOA1"/>
<dbReference type="DMDM" id="158518533"/>
<dbReference type="CPTAC" id="CPTAC-1255"/>
<dbReference type="jPOST" id="Q15788"/>
<dbReference type="MassIVE" id="Q15788"/>
<dbReference type="PaxDb" id="9606-ENSP00000385216"/>
<dbReference type="PeptideAtlas" id="Q15788"/>
<dbReference type="ProteomicsDB" id="60761">
    <molecule id="Q15788-1"/>
</dbReference>
<dbReference type="ProteomicsDB" id="60762">
    <molecule id="Q15788-2"/>
</dbReference>
<dbReference type="ProteomicsDB" id="60763">
    <molecule id="Q15788-3"/>
</dbReference>
<dbReference type="Pumba" id="Q15788"/>
<dbReference type="Antibodypedia" id="27525">
    <property type="antibodies" value="428 antibodies from 40 providers"/>
</dbReference>
<dbReference type="DNASU" id="8648"/>
<dbReference type="Ensembl" id="ENST00000288599.9">
    <molecule id="Q15788-2"/>
    <property type="protein sequence ID" value="ENSP00000288599.5"/>
    <property type="gene ID" value="ENSG00000084676.16"/>
</dbReference>
<dbReference type="Ensembl" id="ENST00000348332.8">
    <molecule id="Q15788-1"/>
    <property type="protein sequence ID" value="ENSP00000320940.5"/>
    <property type="gene ID" value="ENSG00000084676.16"/>
</dbReference>
<dbReference type="Ensembl" id="ENST00000395856.3">
    <molecule id="Q15788-3"/>
    <property type="protein sequence ID" value="ENSP00000379197.3"/>
    <property type="gene ID" value="ENSG00000084676.16"/>
</dbReference>
<dbReference type="Ensembl" id="ENST00000405141.5">
    <molecule id="Q15788-2"/>
    <property type="protein sequence ID" value="ENSP00000385097.1"/>
    <property type="gene ID" value="ENSG00000084676.16"/>
</dbReference>
<dbReference type="Ensembl" id="ENST00000406961.5">
    <molecule id="Q15788-1"/>
    <property type="protein sequence ID" value="ENSP00000385216.1"/>
    <property type="gene ID" value="ENSG00000084676.16"/>
</dbReference>
<dbReference type="GeneID" id="8648"/>
<dbReference type="KEGG" id="hsa:8648"/>
<dbReference type="MANE-Select" id="ENST00000348332.8">
    <property type="protein sequence ID" value="ENSP00000320940.5"/>
    <property type="RefSeq nucleotide sequence ID" value="NM_003743.5"/>
    <property type="RefSeq protein sequence ID" value="NP_003734.3"/>
</dbReference>
<dbReference type="UCSC" id="uc002rfj.4">
    <molecule id="Q15788-1"/>
    <property type="organism name" value="human"/>
</dbReference>
<dbReference type="AGR" id="HGNC:7668"/>
<dbReference type="CTD" id="8648"/>
<dbReference type="DisGeNET" id="8648"/>
<dbReference type="GeneCards" id="NCOA1"/>
<dbReference type="HGNC" id="HGNC:7668">
    <property type="gene designation" value="NCOA1"/>
</dbReference>
<dbReference type="HPA" id="ENSG00000084676">
    <property type="expression patterns" value="Low tissue specificity"/>
</dbReference>
<dbReference type="MalaCards" id="NCOA1"/>
<dbReference type="MIM" id="602691">
    <property type="type" value="gene"/>
</dbReference>
<dbReference type="neXtProt" id="NX_Q15788"/>
<dbReference type="OpenTargets" id="ENSG00000084676"/>
<dbReference type="PharmGKB" id="PA31470"/>
<dbReference type="VEuPathDB" id="HostDB:ENSG00000084676"/>
<dbReference type="eggNOG" id="KOG3561">
    <property type="taxonomic scope" value="Eukaryota"/>
</dbReference>
<dbReference type="GeneTree" id="ENSGT00950000183021"/>
<dbReference type="HOGENOM" id="CLU_001988_0_0_1"/>
<dbReference type="InParanoid" id="Q15788"/>
<dbReference type="OMA" id="SRTCPQQ"/>
<dbReference type="OrthoDB" id="10035882at2759"/>
<dbReference type="PAN-GO" id="Q15788">
    <property type="GO annotations" value="5 GO annotations based on evolutionary models"/>
</dbReference>
<dbReference type="PhylomeDB" id="Q15788"/>
<dbReference type="TreeFam" id="TF332652"/>
<dbReference type="BRENDA" id="2.3.1.48">
    <property type="organism ID" value="2681"/>
</dbReference>
<dbReference type="PathwayCommons" id="Q15788"/>
<dbReference type="Reactome" id="R-HSA-1368082">
    <property type="pathway name" value="RORA activates gene expression"/>
</dbReference>
<dbReference type="Reactome" id="R-HSA-1368108">
    <property type="pathway name" value="BMAL1:CLOCK,NPAS2 activates circadian gene expression"/>
</dbReference>
<dbReference type="Reactome" id="R-HSA-159418">
    <property type="pathway name" value="Recycling of bile acids and salts"/>
</dbReference>
<dbReference type="Reactome" id="R-HSA-192105">
    <property type="pathway name" value="Synthesis of bile acids and bile salts"/>
</dbReference>
<dbReference type="Reactome" id="R-HSA-193368">
    <property type="pathway name" value="Synthesis of bile acids and bile salts via 7alpha-hydroxycholesterol"/>
</dbReference>
<dbReference type="Reactome" id="R-HSA-193807">
    <property type="pathway name" value="Synthesis of bile acids and bile salts via 27-hydroxycholesterol"/>
</dbReference>
<dbReference type="Reactome" id="R-HSA-1989781">
    <property type="pathway name" value="PPARA activates gene expression"/>
</dbReference>
<dbReference type="Reactome" id="R-HSA-211976">
    <property type="pathway name" value="Endogenous sterols"/>
</dbReference>
<dbReference type="Reactome" id="R-HSA-2151201">
    <property type="pathway name" value="Transcriptional activation of mitochondrial biogenesis"/>
</dbReference>
<dbReference type="Reactome" id="R-HSA-2426168">
    <property type="pathway name" value="Activation of gene expression by SREBF (SREBP)"/>
</dbReference>
<dbReference type="Reactome" id="R-HSA-3214847">
    <property type="pathway name" value="HATs acetylate histones"/>
</dbReference>
<dbReference type="Reactome" id="R-HSA-381340">
    <property type="pathway name" value="Transcriptional regulation of white adipocyte differentiation"/>
</dbReference>
<dbReference type="Reactome" id="R-HSA-3899300">
    <property type="pathway name" value="SUMOylation of transcription cofactors"/>
</dbReference>
<dbReference type="Reactome" id="R-HSA-400206">
    <property type="pathway name" value="Regulation of lipid metabolism by PPARalpha"/>
</dbReference>
<dbReference type="Reactome" id="R-HSA-400253">
    <property type="pathway name" value="Circadian Clock"/>
</dbReference>
<dbReference type="Reactome" id="R-HSA-9018519">
    <property type="pathway name" value="Estrogen-dependent gene expression"/>
</dbReference>
<dbReference type="Reactome" id="R-HSA-9029569">
    <property type="pathway name" value="NR1H3 &amp; NR1H2 regulate gene expression linked to cholesterol transport and efflux"/>
</dbReference>
<dbReference type="Reactome" id="R-HSA-9623433">
    <property type="pathway name" value="NR1H2 &amp; NR1H3 regulate gene expression to control bile acid homeostasis"/>
</dbReference>
<dbReference type="Reactome" id="R-HSA-9707564">
    <property type="pathway name" value="Cytoprotection by HMOX1"/>
</dbReference>
<dbReference type="Reactome" id="R-HSA-9707616">
    <property type="pathway name" value="Heme signaling"/>
</dbReference>
<dbReference type="Reactome" id="R-HSA-9841922">
    <property type="pathway name" value="MLL4 and MLL3 complexes regulate expression of PPARG target genes in adipogenesis and hepatic steatosis"/>
</dbReference>
<dbReference type="Reactome" id="R-HSA-9844594">
    <property type="pathway name" value="Transcriptional regulation of brown and beige adipocyte differentiation by EBF2"/>
</dbReference>
<dbReference type="SignaLink" id="Q15788"/>
<dbReference type="SIGNOR" id="Q15788"/>
<dbReference type="BioGRID-ORCS" id="8648">
    <property type="hits" value="18 hits in 1174 CRISPR screens"/>
</dbReference>
<dbReference type="ChiTaRS" id="NCOA1">
    <property type="organism name" value="human"/>
</dbReference>
<dbReference type="EvolutionaryTrace" id="Q15788"/>
<dbReference type="GeneWiki" id="Nuclear_receptor_coactivator_1"/>
<dbReference type="GenomeRNAi" id="8648"/>
<dbReference type="Pharos" id="Q15788">
    <property type="development level" value="Tchem"/>
</dbReference>
<dbReference type="PRO" id="PR:Q15788"/>
<dbReference type="Proteomes" id="UP000005640">
    <property type="component" value="Chromosome 2"/>
</dbReference>
<dbReference type="RNAct" id="Q15788">
    <property type="molecule type" value="protein"/>
</dbReference>
<dbReference type="Bgee" id="ENSG00000084676">
    <property type="expression patterns" value="Expressed in middle temporal gyrus and 216 other cell types or tissues"/>
</dbReference>
<dbReference type="ExpressionAtlas" id="Q15788">
    <property type="expression patterns" value="baseline and differential"/>
</dbReference>
<dbReference type="GO" id="GO:0000785">
    <property type="term" value="C:chromatin"/>
    <property type="evidence" value="ECO:0000314"/>
    <property type="project" value="BHF-UCL"/>
</dbReference>
<dbReference type="GO" id="GO:0005829">
    <property type="term" value="C:cytosol"/>
    <property type="evidence" value="ECO:0000314"/>
    <property type="project" value="HPA"/>
</dbReference>
<dbReference type="GO" id="GO:0005654">
    <property type="term" value="C:nucleoplasm"/>
    <property type="evidence" value="ECO:0000314"/>
    <property type="project" value="HPA"/>
</dbReference>
<dbReference type="GO" id="GO:0005634">
    <property type="term" value="C:nucleus"/>
    <property type="evidence" value="ECO:0000318"/>
    <property type="project" value="GO_Central"/>
</dbReference>
<dbReference type="GO" id="GO:0005886">
    <property type="term" value="C:plasma membrane"/>
    <property type="evidence" value="ECO:0000314"/>
    <property type="project" value="HPA"/>
</dbReference>
<dbReference type="GO" id="GO:0032991">
    <property type="term" value="C:protein-containing complex"/>
    <property type="evidence" value="ECO:0000315"/>
    <property type="project" value="CAFA"/>
</dbReference>
<dbReference type="GO" id="GO:0090575">
    <property type="term" value="C:RNA polymerase II transcription regulator complex"/>
    <property type="evidence" value="ECO:0000314"/>
    <property type="project" value="ComplexPortal"/>
</dbReference>
<dbReference type="GO" id="GO:0005667">
    <property type="term" value="C:transcription regulator complex"/>
    <property type="evidence" value="ECO:0000353"/>
    <property type="project" value="ComplexPortal"/>
</dbReference>
<dbReference type="GO" id="GO:0003682">
    <property type="term" value="F:chromatin binding"/>
    <property type="evidence" value="ECO:0007669"/>
    <property type="project" value="Ensembl"/>
</dbReference>
<dbReference type="GO" id="GO:0004402">
    <property type="term" value="F:histone acetyltransferase activity"/>
    <property type="evidence" value="ECO:0007669"/>
    <property type="project" value="UniProtKB-EC"/>
</dbReference>
<dbReference type="GO" id="GO:0030331">
    <property type="term" value="F:nuclear estrogen receptor binding"/>
    <property type="evidence" value="ECO:0000353"/>
    <property type="project" value="ParkinsonsUK-UCL"/>
</dbReference>
<dbReference type="GO" id="GO:0016922">
    <property type="term" value="F:nuclear receptor binding"/>
    <property type="evidence" value="ECO:0000314"/>
    <property type="project" value="UniProtKB"/>
</dbReference>
<dbReference type="GO" id="GO:0046965">
    <property type="term" value="F:nuclear retinoid X receptor binding"/>
    <property type="evidence" value="ECO:0007669"/>
    <property type="project" value="Ensembl"/>
</dbReference>
<dbReference type="GO" id="GO:0046983">
    <property type="term" value="F:protein dimerization activity"/>
    <property type="evidence" value="ECO:0007669"/>
    <property type="project" value="InterPro"/>
</dbReference>
<dbReference type="GO" id="GO:0044877">
    <property type="term" value="F:protein-containing complex binding"/>
    <property type="evidence" value="ECO:0007669"/>
    <property type="project" value="Ensembl"/>
</dbReference>
<dbReference type="GO" id="GO:0000977">
    <property type="term" value="F:RNA polymerase II transcription regulatory region sequence-specific DNA binding"/>
    <property type="evidence" value="ECO:0007669"/>
    <property type="project" value="Ensembl"/>
</dbReference>
<dbReference type="GO" id="GO:0003713">
    <property type="term" value="F:transcription coactivator activity"/>
    <property type="evidence" value="ECO:0000314"/>
    <property type="project" value="UniProtKB"/>
</dbReference>
<dbReference type="GO" id="GO:0032870">
    <property type="term" value="P:cellular response to hormone stimulus"/>
    <property type="evidence" value="ECO:0000318"/>
    <property type="project" value="GO_Central"/>
</dbReference>
<dbReference type="GO" id="GO:1904017">
    <property type="term" value="P:cellular response to Thyroglobulin triiodothyronine"/>
    <property type="evidence" value="ECO:0007669"/>
    <property type="project" value="Ensembl"/>
</dbReference>
<dbReference type="GO" id="GO:0021549">
    <property type="term" value="P:cerebellum development"/>
    <property type="evidence" value="ECO:0007669"/>
    <property type="project" value="Ensembl"/>
</dbReference>
<dbReference type="GO" id="GO:0021987">
    <property type="term" value="P:cerebral cortex development"/>
    <property type="evidence" value="ECO:0007669"/>
    <property type="project" value="Ensembl"/>
</dbReference>
<dbReference type="GO" id="GO:0030520">
    <property type="term" value="P:estrogen receptor signaling pathway"/>
    <property type="evidence" value="ECO:0000314"/>
    <property type="project" value="UniProt"/>
</dbReference>
<dbReference type="GO" id="GO:0044849">
    <property type="term" value="P:estrous cycle"/>
    <property type="evidence" value="ECO:0007669"/>
    <property type="project" value="Ensembl"/>
</dbReference>
<dbReference type="GO" id="GO:0021766">
    <property type="term" value="P:hippocampus development"/>
    <property type="evidence" value="ECO:0007669"/>
    <property type="project" value="Ensembl"/>
</dbReference>
<dbReference type="GO" id="GO:0021854">
    <property type="term" value="P:hypothalamus development"/>
    <property type="evidence" value="ECO:0007669"/>
    <property type="project" value="Ensembl"/>
</dbReference>
<dbReference type="GO" id="GO:0060713">
    <property type="term" value="P:labyrinthine layer morphogenesis"/>
    <property type="evidence" value="ECO:0007669"/>
    <property type="project" value="Ensembl"/>
</dbReference>
<dbReference type="GO" id="GO:0007595">
    <property type="term" value="P:lactation"/>
    <property type="evidence" value="ECO:0007669"/>
    <property type="project" value="Ensembl"/>
</dbReference>
<dbReference type="GO" id="GO:0008584">
    <property type="term" value="P:male gonad development"/>
    <property type="evidence" value="ECO:0007669"/>
    <property type="project" value="Ensembl"/>
</dbReference>
<dbReference type="GO" id="GO:0060179">
    <property type="term" value="P:male mating behavior"/>
    <property type="evidence" value="ECO:0007669"/>
    <property type="project" value="Ensembl"/>
</dbReference>
<dbReference type="GO" id="GO:0042789">
    <property type="term" value="P:mRNA transcription by RNA polymerase II"/>
    <property type="evidence" value="ECO:0000314"/>
    <property type="project" value="ComplexPortal"/>
</dbReference>
<dbReference type="GO" id="GO:0035357">
    <property type="term" value="P:peroxisome proliferator activated receptor signaling pathway"/>
    <property type="evidence" value="ECO:0000303"/>
    <property type="project" value="ComplexPortal"/>
</dbReference>
<dbReference type="GO" id="GO:1904179">
    <property type="term" value="P:positive regulation of adipose tissue development"/>
    <property type="evidence" value="ECO:0000303"/>
    <property type="project" value="ComplexPortal"/>
</dbReference>
<dbReference type="GO" id="GO:0043065">
    <property type="term" value="P:positive regulation of apoptotic process"/>
    <property type="evidence" value="ECO:0007669"/>
    <property type="project" value="Ensembl"/>
</dbReference>
<dbReference type="GO" id="GO:0045893">
    <property type="term" value="P:positive regulation of DNA-templated transcription"/>
    <property type="evidence" value="ECO:0000314"/>
    <property type="project" value="UniProtKB"/>
</dbReference>
<dbReference type="GO" id="GO:0045925">
    <property type="term" value="P:positive regulation of female receptivity"/>
    <property type="evidence" value="ECO:0007669"/>
    <property type="project" value="Ensembl"/>
</dbReference>
<dbReference type="GO" id="GO:0045666">
    <property type="term" value="P:positive regulation of neuron differentiation"/>
    <property type="evidence" value="ECO:0007669"/>
    <property type="project" value="Ensembl"/>
</dbReference>
<dbReference type="GO" id="GO:0045944">
    <property type="term" value="P:positive regulation of transcription by RNA polymerase II"/>
    <property type="evidence" value="ECO:0000314"/>
    <property type="project" value="UniProtKB"/>
</dbReference>
<dbReference type="GO" id="GO:0000435">
    <property type="term" value="P:positive regulation of transcription from RNA polymerase II promoter by galactose"/>
    <property type="evidence" value="ECO:0000314"/>
    <property type="project" value="UniProtKB"/>
</dbReference>
<dbReference type="GO" id="GO:0050847">
    <property type="term" value="P:progesterone receptor signaling pathway"/>
    <property type="evidence" value="ECO:0000314"/>
    <property type="project" value="UniProt"/>
</dbReference>
<dbReference type="GO" id="GO:1900076">
    <property type="term" value="P:regulation of cellular response to insulin stimulus"/>
    <property type="evidence" value="ECO:0000303"/>
    <property type="project" value="ComplexPortal"/>
</dbReference>
<dbReference type="GO" id="GO:0002155">
    <property type="term" value="P:regulation of thyroid hormone receptor signaling pathway"/>
    <property type="evidence" value="ECO:0007669"/>
    <property type="project" value="Ensembl"/>
</dbReference>
<dbReference type="GO" id="GO:0032355">
    <property type="term" value="P:response to estradiol"/>
    <property type="evidence" value="ECO:0007669"/>
    <property type="project" value="Ensembl"/>
</dbReference>
<dbReference type="GO" id="GO:0032570">
    <property type="term" value="P:response to progesterone"/>
    <property type="evidence" value="ECO:0007669"/>
    <property type="project" value="Ensembl"/>
</dbReference>
<dbReference type="GO" id="GO:0032526">
    <property type="term" value="P:response to retinoic acid"/>
    <property type="evidence" value="ECO:0007669"/>
    <property type="project" value="Ensembl"/>
</dbReference>
<dbReference type="CDD" id="cd18948">
    <property type="entry name" value="bHLH-PAS_NCoA1_SRC1"/>
    <property type="match status" value="1"/>
</dbReference>
<dbReference type="CDD" id="cd00130">
    <property type="entry name" value="PAS"/>
    <property type="match status" value="1"/>
</dbReference>
<dbReference type="FunFam" id="3.30.450.20:FF:000007">
    <property type="entry name" value="Nuclear receptor coactivator"/>
    <property type="match status" value="1"/>
</dbReference>
<dbReference type="FunFam" id="3.30.450.20:FF:000031">
    <property type="entry name" value="Nuclear receptor coactivator"/>
    <property type="match status" value="1"/>
</dbReference>
<dbReference type="FunFam" id="4.10.280.10:FF:000008">
    <property type="entry name" value="Nuclear receptor coactivator"/>
    <property type="match status" value="1"/>
</dbReference>
<dbReference type="Gene3D" id="6.10.140.410">
    <property type="match status" value="1"/>
</dbReference>
<dbReference type="Gene3D" id="4.10.280.10">
    <property type="entry name" value="Helix-loop-helix DNA-binding domain"/>
    <property type="match status" value="1"/>
</dbReference>
<dbReference type="Gene3D" id="3.30.450.20">
    <property type="entry name" value="PAS domain"/>
    <property type="match status" value="2"/>
</dbReference>
<dbReference type="IDEAL" id="IID00083"/>
<dbReference type="InterPro" id="IPR011598">
    <property type="entry name" value="bHLH_dom"/>
</dbReference>
<dbReference type="InterPro" id="IPR056193">
    <property type="entry name" value="bHLH_NCOA1-3"/>
</dbReference>
<dbReference type="InterPro" id="IPR036638">
    <property type="entry name" value="HLH_DNA-bd_sf"/>
</dbReference>
<dbReference type="InterPro" id="IPR010011">
    <property type="entry name" value="NCO_DUF1518"/>
</dbReference>
<dbReference type="InterPro" id="IPR028819">
    <property type="entry name" value="NCOA1_bHLH"/>
</dbReference>
<dbReference type="InterPro" id="IPR009110">
    <property type="entry name" value="Nuc_rcpt_coact"/>
</dbReference>
<dbReference type="InterPro" id="IPR014920">
    <property type="entry name" value="Nuc_rcpt_coact_Ncoa-typ"/>
</dbReference>
<dbReference type="InterPro" id="IPR037077">
    <property type="entry name" value="Nuc_rcpt_coact_Ncoa_int_sf"/>
</dbReference>
<dbReference type="InterPro" id="IPR017426">
    <property type="entry name" value="Nuclear_rcpt_coactivator"/>
</dbReference>
<dbReference type="InterPro" id="IPR000014">
    <property type="entry name" value="PAS"/>
</dbReference>
<dbReference type="InterPro" id="IPR035965">
    <property type="entry name" value="PAS-like_dom_sf"/>
</dbReference>
<dbReference type="InterPro" id="IPR013767">
    <property type="entry name" value="PAS_fold"/>
</dbReference>
<dbReference type="InterPro" id="IPR014935">
    <property type="entry name" value="SRC/p160_LXXLL"/>
</dbReference>
<dbReference type="PANTHER" id="PTHR10684">
    <property type="entry name" value="NUCLEAR RECEPTOR COACTIVATOR"/>
    <property type="match status" value="1"/>
</dbReference>
<dbReference type="PANTHER" id="PTHR10684:SF1">
    <property type="entry name" value="NUCLEAR RECEPTOR COACTIVATOR 1"/>
    <property type="match status" value="1"/>
</dbReference>
<dbReference type="Pfam" id="PF23172">
    <property type="entry name" value="bHLH_NCOA"/>
    <property type="match status" value="1"/>
</dbReference>
<dbReference type="Pfam" id="PF07469">
    <property type="entry name" value="DUF1518"/>
    <property type="match status" value="2"/>
</dbReference>
<dbReference type="Pfam" id="PF16665">
    <property type="entry name" value="NCOA_u2"/>
    <property type="match status" value="1"/>
</dbReference>
<dbReference type="Pfam" id="PF08815">
    <property type="entry name" value="Nuc_rec_co-act"/>
    <property type="match status" value="1"/>
</dbReference>
<dbReference type="Pfam" id="PF00989">
    <property type="entry name" value="PAS"/>
    <property type="match status" value="1"/>
</dbReference>
<dbReference type="Pfam" id="PF14598">
    <property type="entry name" value="PAS_11"/>
    <property type="match status" value="1"/>
</dbReference>
<dbReference type="Pfam" id="PF08832">
    <property type="entry name" value="SRC-1"/>
    <property type="match status" value="1"/>
</dbReference>
<dbReference type="PIRSF" id="PIRSF038181">
    <property type="entry name" value="Nuclear_receptor_coactivator"/>
    <property type="match status" value="1"/>
</dbReference>
<dbReference type="SMART" id="SM01151">
    <property type="entry name" value="DUF1518"/>
    <property type="match status" value="2"/>
</dbReference>
<dbReference type="SMART" id="SM00353">
    <property type="entry name" value="HLH"/>
    <property type="match status" value="1"/>
</dbReference>
<dbReference type="SMART" id="SM00091">
    <property type="entry name" value="PAS"/>
    <property type="match status" value="1"/>
</dbReference>
<dbReference type="SUPFAM" id="SSF47459">
    <property type="entry name" value="HLH, helix-loop-helix DNA-binding domain"/>
    <property type="match status" value="1"/>
</dbReference>
<dbReference type="SUPFAM" id="SSF69125">
    <property type="entry name" value="Nuclear receptor coactivator interlocking domain"/>
    <property type="match status" value="1"/>
</dbReference>
<dbReference type="SUPFAM" id="SSF55785">
    <property type="entry name" value="PYP-like sensor domain (PAS domain)"/>
    <property type="match status" value="2"/>
</dbReference>
<dbReference type="PROSITE" id="PS50888">
    <property type="entry name" value="BHLH"/>
    <property type="match status" value="1"/>
</dbReference>
<dbReference type="PROSITE" id="PS50112">
    <property type="entry name" value="PAS"/>
    <property type="match status" value="1"/>
</dbReference>
<evidence type="ECO:0000250" key="1">
    <source>
        <dbReference type="UniProtKB" id="P70365"/>
    </source>
</evidence>
<evidence type="ECO:0000255" key="2">
    <source>
        <dbReference type="PROSITE-ProRule" id="PRU00140"/>
    </source>
</evidence>
<evidence type="ECO:0000255" key="3">
    <source>
        <dbReference type="PROSITE-ProRule" id="PRU00981"/>
    </source>
</evidence>
<evidence type="ECO:0000256" key="4">
    <source>
        <dbReference type="SAM" id="MobiDB-lite"/>
    </source>
</evidence>
<evidence type="ECO:0000269" key="5">
    <source>
    </source>
</evidence>
<evidence type="ECO:0000269" key="6">
    <source>
    </source>
</evidence>
<evidence type="ECO:0000269" key="7">
    <source>
    </source>
</evidence>
<evidence type="ECO:0000269" key="8">
    <source>
    </source>
</evidence>
<evidence type="ECO:0000269" key="9">
    <source>
    </source>
</evidence>
<evidence type="ECO:0000269" key="10">
    <source>
    </source>
</evidence>
<evidence type="ECO:0000269" key="11">
    <source>
    </source>
</evidence>
<evidence type="ECO:0000269" key="12">
    <source>
    </source>
</evidence>
<evidence type="ECO:0000269" key="13">
    <source>
    </source>
</evidence>
<evidence type="ECO:0000269" key="14">
    <source>
    </source>
</evidence>
<evidence type="ECO:0000269" key="15">
    <source>
    </source>
</evidence>
<evidence type="ECO:0000269" key="16">
    <source>
    </source>
</evidence>
<evidence type="ECO:0000269" key="17">
    <source>
    </source>
</evidence>
<evidence type="ECO:0000269" key="18">
    <source>
    </source>
</evidence>
<evidence type="ECO:0000269" key="19">
    <source>
    </source>
</evidence>
<evidence type="ECO:0000269" key="20">
    <source>
    </source>
</evidence>
<evidence type="ECO:0000269" key="21">
    <source>
    </source>
</evidence>
<evidence type="ECO:0000269" key="22">
    <source>
    </source>
</evidence>
<evidence type="ECO:0000269" key="23">
    <source>
    </source>
</evidence>
<evidence type="ECO:0000269" key="24">
    <source>
    </source>
</evidence>
<evidence type="ECO:0000269" key="25">
    <source>
    </source>
</evidence>
<evidence type="ECO:0000269" key="26">
    <source>
    </source>
</evidence>
<evidence type="ECO:0000269" key="27">
    <source>
    </source>
</evidence>
<evidence type="ECO:0000269" key="28">
    <source>
    </source>
</evidence>
<evidence type="ECO:0000269" key="29">
    <source>
    </source>
</evidence>
<evidence type="ECO:0000269" key="30">
    <source>
    </source>
</evidence>
<evidence type="ECO:0000269" key="31">
    <source>
    </source>
</evidence>
<evidence type="ECO:0000269" key="32">
    <source>
    </source>
</evidence>
<evidence type="ECO:0000269" key="33">
    <source>
    </source>
</evidence>
<evidence type="ECO:0000269" key="34">
    <source>
    </source>
</evidence>
<evidence type="ECO:0000269" key="35">
    <source>
    </source>
</evidence>
<evidence type="ECO:0000269" key="36">
    <source>
    </source>
</evidence>
<evidence type="ECO:0000269" key="37">
    <source ref="4"/>
</evidence>
<evidence type="ECO:0000303" key="38">
    <source>
    </source>
</evidence>
<evidence type="ECO:0000303" key="39">
    <source>
    </source>
</evidence>
<evidence type="ECO:0000303" key="40">
    <source>
    </source>
</evidence>
<evidence type="ECO:0000303" key="41">
    <source>
    </source>
</evidence>
<evidence type="ECO:0000303" key="42">
    <source>
    </source>
</evidence>
<evidence type="ECO:0000305" key="43"/>
<evidence type="ECO:0007744" key="44">
    <source>
        <dbReference type="PDB" id="1K74"/>
    </source>
</evidence>
<evidence type="ECO:0007744" key="45">
    <source>
        <dbReference type="PDB" id="1K7L"/>
    </source>
</evidence>
<evidence type="ECO:0007744" key="46">
    <source>
        <dbReference type="PDB" id="1KV6"/>
    </source>
</evidence>
<evidence type="ECO:0007744" key="47">
    <source>
        <dbReference type="PDB" id="2PRG"/>
    </source>
</evidence>
<evidence type="ECO:0007744" key="48">
    <source>
    </source>
</evidence>
<evidence type="ECO:0007744" key="49">
    <source>
    </source>
</evidence>
<evidence type="ECO:0007744" key="50">
    <source>
    </source>
</evidence>
<evidence type="ECO:0007744" key="51">
    <source>
    </source>
</evidence>
<evidence type="ECO:0007829" key="52">
    <source>
        <dbReference type="PDB" id="1NQ7"/>
    </source>
</evidence>
<evidence type="ECO:0007829" key="53">
    <source>
        <dbReference type="PDB" id="2C52"/>
    </source>
</evidence>
<evidence type="ECO:0007829" key="54">
    <source>
        <dbReference type="PDB" id="5HJS"/>
    </source>
</evidence>
<evidence type="ECO:0007829" key="55">
    <source>
        <dbReference type="PDB" id="5NWM"/>
    </source>
</evidence>
<evidence type="ECO:0007829" key="56">
    <source>
        <dbReference type="PDB" id="5Q0K"/>
    </source>
</evidence>
<evidence type="ECO:0007829" key="57">
    <source>
        <dbReference type="PDB" id="6GEV"/>
    </source>
</evidence>
<evidence type="ECO:0007829" key="58">
    <source>
        <dbReference type="PDB" id="7XVY"/>
    </source>
</evidence>
<organism>
    <name type="scientific">Homo sapiens</name>
    <name type="common">Human</name>
    <dbReference type="NCBI Taxonomy" id="9606"/>
    <lineage>
        <taxon>Eukaryota</taxon>
        <taxon>Metazoa</taxon>
        <taxon>Chordata</taxon>
        <taxon>Craniata</taxon>
        <taxon>Vertebrata</taxon>
        <taxon>Euteleostomi</taxon>
        <taxon>Mammalia</taxon>
        <taxon>Eutheria</taxon>
        <taxon>Euarchontoglires</taxon>
        <taxon>Primates</taxon>
        <taxon>Haplorrhini</taxon>
        <taxon>Catarrhini</taxon>
        <taxon>Hominidae</taxon>
        <taxon>Homo</taxon>
    </lineage>
</organism>
<name>NCOA1_HUMAN</name>
<reference key="1">
    <citation type="journal article" date="1996" name="Endocrinology">
        <title>Molecular cloning and properties of a full-length putative thyroid hormone receptor coactivator.</title>
        <authorList>
            <person name="Takeshita A."/>
            <person name="Yen P.M."/>
            <person name="Misiti S."/>
            <person name="Cardona G.R."/>
            <person name="Liu Y."/>
            <person name="Chin W.W."/>
        </authorList>
    </citation>
    <scope>NUCLEOTIDE SEQUENCE [MRNA] (ISOFORM 3)</scope>
    <scope>INTERACTION WITH GTF2B</scope>
    <scope>VARIANTS LYS-457; LYS-466; PRO-474; THR-591; ALA-685; PHE-999 AND THR-1154</scope>
</reference>
<reference key="2">
    <citation type="journal article" date="1998" name="EMBO J.">
        <title>Isoforms of steroid receptor coactivator 1 differ in their ability to potentiate transcription by the oestrogen receptor.</title>
        <authorList>
            <person name="Kalkhoven E."/>
            <person name="Valentine J.E."/>
            <person name="Heery D.M."/>
            <person name="Parker M.G."/>
        </authorList>
    </citation>
    <scope>NUCLEOTIDE SEQUENCE [MRNA] (ISOFORMS 1 AND 2)</scope>
    <scope>FUNCTION</scope>
    <scope>TISSUE SPECIFICITY</scope>
    <scope>MUTAGENESIS OF 636-LEU-LEU-637; 693-LEU-LEU-694 AND 752-LEU-LEU-753</scope>
</reference>
<reference key="3">
    <citation type="journal article" date="1998" name="J. Biol. Chem.">
        <title>The steroid receptor coactivator-1 contains multiple receptor interacting and activation domains that cooperatively enhance the activation function 1 (AF1) and AF2 domains of steroid receptors.</title>
        <authorList>
            <person name="Onate S.A."/>
            <person name="Boonyaratanakornkit V."/>
            <person name="Spencer T.E."/>
            <person name="Tsai S.Y."/>
            <person name="Tsai M.-J."/>
            <person name="Edwards D.P."/>
            <person name="O'Malley B.W."/>
        </authorList>
    </citation>
    <scope>NUCLEOTIDE SEQUENCE [MRNA] (ISOFORM 1)</scope>
    <scope>VARIANTS LYS-457; LYS-466; PRO-474; THR-591; ALA-685; PHE-999 AND THR-1154</scope>
    <source>
        <tissue>Heart muscle</tissue>
        <tissue>Skeletal muscle</tissue>
    </source>
</reference>
<reference key="4">
    <citation type="submission" date="2007-06" db="EMBL/GenBank/DDBJ databases">
        <authorList>
            <consortium name="SeattleSNPs variation discovery resource"/>
        </authorList>
    </citation>
    <scope>NUCLEOTIDE SEQUENCE [GENOMIC DNA]</scope>
    <scope>VARIANTS ILE-1238 AND SER-1272</scope>
</reference>
<reference key="5">
    <citation type="journal article" date="2005" name="Nature">
        <title>Generation and annotation of the DNA sequences of human chromosomes 2 and 4.</title>
        <authorList>
            <person name="Hillier L.W."/>
            <person name="Graves T.A."/>
            <person name="Fulton R.S."/>
            <person name="Fulton L.A."/>
            <person name="Pepin K.H."/>
            <person name="Minx P."/>
            <person name="Wagner-McPherson C."/>
            <person name="Layman D."/>
            <person name="Wylie K."/>
            <person name="Sekhon M."/>
            <person name="Becker M.C."/>
            <person name="Fewell G.A."/>
            <person name="Delehaunty K.D."/>
            <person name="Miner T.L."/>
            <person name="Nash W.E."/>
            <person name="Kremitzki C."/>
            <person name="Oddy L."/>
            <person name="Du H."/>
            <person name="Sun H."/>
            <person name="Bradshaw-Cordum H."/>
            <person name="Ali J."/>
            <person name="Carter J."/>
            <person name="Cordes M."/>
            <person name="Harris A."/>
            <person name="Isak A."/>
            <person name="van Brunt A."/>
            <person name="Nguyen C."/>
            <person name="Du F."/>
            <person name="Courtney L."/>
            <person name="Kalicki J."/>
            <person name="Ozersky P."/>
            <person name="Abbott S."/>
            <person name="Armstrong J."/>
            <person name="Belter E.A."/>
            <person name="Caruso L."/>
            <person name="Cedroni M."/>
            <person name="Cotton M."/>
            <person name="Davidson T."/>
            <person name="Desai A."/>
            <person name="Elliott G."/>
            <person name="Erb T."/>
            <person name="Fronick C."/>
            <person name="Gaige T."/>
            <person name="Haakenson W."/>
            <person name="Haglund K."/>
            <person name="Holmes A."/>
            <person name="Harkins R."/>
            <person name="Kim K."/>
            <person name="Kruchowski S.S."/>
            <person name="Strong C.M."/>
            <person name="Grewal N."/>
            <person name="Goyea E."/>
            <person name="Hou S."/>
            <person name="Levy A."/>
            <person name="Martinka S."/>
            <person name="Mead K."/>
            <person name="McLellan M.D."/>
            <person name="Meyer R."/>
            <person name="Randall-Maher J."/>
            <person name="Tomlinson C."/>
            <person name="Dauphin-Kohlberg S."/>
            <person name="Kozlowicz-Reilly A."/>
            <person name="Shah N."/>
            <person name="Swearengen-Shahid S."/>
            <person name="Snider J."/>
            <person name="Strong J.T."/>
            <person name="Thompson J."/>
            <person name="Yoakum M."/>
            <person name="Leonard S."/>
            <person name="Pearman C."/>
            <person name="Trani L."/>
            <person name="Radionenko M."/>
            <person name="Waligorski J.E."/>
            <person name="Wang C."/>
            <person name="Rock S.M."/>
            <person name="Tin-Wollam A.-M."/>
            <person name="Maupin R."/>
            <person name="Latreille P."/>
            <person name="Wendl M.C."/>
            <person name="Yang S.-P."/>
            <person name="Pohl C."/>
            <person name="Wallis J.W."/>
            <person name="Spieth J."/>
            <person name="Bieri T.A."/>
            <person name="Berkowicz N."/>
            <person name="Nelson J.O."/>
            <person name="Osborne J."/>
            <person name="Ding L."/>
            <person name="Meyer R."/>
            <person name="Sabo A."/>
            <person name="Shotland Y."/>
            <person name="Sinha P."/>
            <person name="Wohldmann P.E."/>
            <person name="Cook L.L."/>
            <person name="Hickenbotham M.T."/>
            <person name="Eldred J."/>
            <person name="Williams D."/>
            <person name="Jones T.A."/>
            <person name="She X."/>
            <person name="Ciccarelli F.D."/>
            <person name="Izaurralde E."/>
            <person name="Taylor J."/>
            <person name="Schmutz J."/>
            <person name="Myers R.M."/>
            <person name="Cox D.R."/>
            <person name="Huang X."/>
            <person name="McPherson J.D."/>
            <person name="Mardis E.R."/>
            <person name="Clifton S.W."/>
            <person name="Warren W.C."/>
            <person name="Chinwalla A.T."/>
            <person name="Eddy S.R."/>
            <person name="Marra M.A."/>
            <person name="Ovcharenko I."/>
            <person name="Furey T.S."/>
            <person name="Miller W."/>
            <person name="Eichler E.E."/>
            <person name="Bork P."/>
            <person name="Suyama M."/>
            <person name="Torrents D."/>
            <person name="Waterston R.H."/>
            <person name="Wilson R.K."/>
        </authorList>
    </citation>
    <scope>NUCLEOTIDE SEQUENCE [LARGE SCALE GENOMIC DNA]</scope>
</reference>
<reference key="6">
    <citation type="submission" date="2005-09" db="EMBL/GenBank/DDBJ databases">
        <authorList>
            <person name="Mural R.J."/>
            <person name="Istrail S."/>
            <person name="Sutton G.G."/>
            <person name="Florea L."/>
            <person name="Halpern A.L."/>
            <person name="Mobarry C.M."/>
            <person name="Lippert R."/>
            <person name="Walenz B."/>
            <person name="Shatkay H."/>
            <person name="Dew I."/>
            <person name="Miller J.R."/>
            <person name="Flanigan M.J."/>
            <person name="Edwards N.J."/>
            <person name="Bolanos R."/>
            <person name="Fasulo D."/>
            <person name="Halldorsson B.V."/>
            <person name="Hannenhalli S."/>
            <person name="Turner R."/>
            <person name="Yooseph S."/>
            <person name="Lu F."/>
            <person name="Nusskern D.R."/>
            <person name="Shue B.C."/>
            <person name="Zheng X.H."/>
            <person name="Zhong F."/>
            <person name="Delcher A.L."/>
            <person name="Huson D.H."/>
            <person name="Kravitz S.A."/>
            <person name="Mouchard L."/>
            <person name="Reinert K."/>
            <person name="Remington K.A."/>
            <person name="Clark A.G."/>
            <person name="Waterman M.S."/>
            <person name="Eichler E.E."/>
            <person name="Adams M.D."/>
            <person name="Hunkapiller M.W."/>
            <person name="Myers E.W."/>
            <person name="Venter J.C."/>
        </authorList>
    </citation>
    <scope>NUCLEOTIDE SEQUENCE [LARGE SCALE GENOMIC DNA]</scope>
</reference>
<reference key="7">
    <citation type="journal article" date="2004" name="Genome Res.">
        <title>The status, quality, and expansion of the NIH full-length cDNA project: the Mammalian Gene Collection (MGC).</title>
        <authorList>
            <consortium name="The MGC Project Team"/>
        </authorList>
    </citation>
    <scope>NUCLEOTIDE SEQUENCE [LARGE SCALE MRNA] (ISOFORMS 1 AND 2)</scope>
</reference>
<reference key="8">
    <citation type="journal article" date="1995" name="Science">
        <title>Sequence and characterization of a coactivator for the steroid hormone receptor superfamily.</title>
        <authorList>
            <person name="Onate S.A."/>
            <person name="Tsai S.Y."/>
            <person name="Tsai M.-J."/>
            <person name="O'Malley B.W."/>
        </authorList>
    </citation>
    <scope>NUCLEOTIDE SEQUENCE [MRNA] OF 363-1441 (ISOFORM 1)</scope>
    <scope>FUNCTION</scope>
    <scope>INTERACTION WITH ESR1; RXRA; GCCR; PGR AND THRA</scope>
    <scope>VARIANTS LYS-457; LYS-466; PRO-474; THR-591; ALA-685; ALA-794; PHE-999 AND THR-1154</scope>
</reference>
<reference key="9">
    <citation type="journal article" date="1995" name="Virology">
        <title>Analysis of human immunodeficiency virus type 1 promoter insertion in vivo.</title>
        <authorList>
            <person name="Raineri I."/>
            <person name="Soler M."/>
            <person name="Senn H.-P."/>
        </authorList>
    </citation>
    <scope>NUCLEOTIDE SEQUENCE [MRNA] OF 865-1441 (ISOFORM 2)</scope>
</reference>
<reference key="10">
    <citation type="journal article" date="2004" name="Cancer Res.">
        <title>Gene expression signatures identify rhabdomyosarcoma subtypes and detect a novel t(2;2)(q35;p23) translocation fusing PAX3 to NCOA1.</title>
        <authorList>
            <person name="Wachtel M."/>
            <person name="Dettling M."/>
            <person name="Koscielniak E."/>
            <person name="Stegmaier S."/>
            <person name="Treuner J."/>
            <person name="Simon-Klingenstein K."/>
            <person name="Buehlmann P."/>
            <person name="Niggli F.K."/>
            <person name="Schaefer B.W."/>
        </authorList>
    </citation>
    <scope>NUCLEOTIDE SEQUENCE [MRNA] OF 868-1441 (ISOFORM 2)</scope>
    <scope>CHROMOSOMAL TRANSLOCATION WITH PAX3</scope>
    <scope>TISSUE SPECIFICITY</scope>
</reference>
<reference key="11">
    <citation type="journal article" date="1997" name="Biochem. Biophys. Res. Commun.">
        <title>A splicing variant of steroid receptor coactivator-1 (SRC-1E): the major isoform of SRC-1 to mediate thyroid hormone action.</title>
        <authorList>
            <person name="Hayashi Y."/>
            <person name="Ohmori S."/>
            <person name="Ito T."/>
            <person name="Seo H."/>
        </authorList>
    </citation>
    <scope>IDENTIFICATION (ISOFORM 2)</scope>
    <scope>FUNCTION</scope>
    <scope>ALTERNATIVE SPLICING</scope>
</reference>
<reference key="12">
    <citation type="journal article" date="1997" name="Nature">
        <title>Steroid receptor coactivator-1 is a histone acetyltransferase.</title>
        <authorList>
            <person name="Spencer T.E."/>
            <person name="Jenster G."/>
            <person name="Burcin M.M."/>
            <person name="Allis C.D."/>
            <person name="Zhou J."/>
            <person name="Mizzen C.A."/>
            <person name="McKenna N.J."/>
            <person name="Onate S.A."/>
            <person name="Tsai S.Y."/>
            <person name="Tsai M.-J."/>
            <person name="O'Malley B.W."/>
        </authorList>
    </citation>
    <scope>FUNCTION AS A HISTONE ACETYLTRANSFERASE</scope>
    <scope>INTERACTION WITH PCAF</scope>
</reference>
<reference key="13">
    <citation type="journal article" date="1997" name="Proc. Natl. Acad. Sci. U.S.A.">
        <title>Steroid receptor induction of gene transcription: a two-step model.</title>
        <authorList>
            <person name="Jenster G."/>
            <person name="Spencer T.E."/>
            <person name="Burcin M.M."/>
            <person name="Tsai S.Y."/>
            <person name="Tsai M.-J."/>
            <person name="O'Malley B.W."/>
        </authorList>
    </citation>
    <scope>FUNCTION</scope>
</reference>
<reference key="14">
    <citation type="journal article" date="1999" name="Int. J. Cancer">
        <title>Antigens recognized by autologous antibody in patients with renal-cell carcinoma.</title>
        <authorList>
            <person name="Scanlan M.J."/>
            <person name="Gordan J.D."/>
            <person name="Williamson B."/>
            <person name="Stockert E."/>
            <person name="Bander N.H."/>
            <person name="Jongeneel C.V."/>
            <person name="Gure A.O."/>
            <person name="Jaeger D."/>
            <person name="Jaeger E."/>
            <person name="Knuth A."/>
            <person name="Chen Y.-T."/>
            <person name="Old L.J."/>
        </authorList>
    </citation>
    <scope>IDENTIFICATION AS A RENAL CANCER ANTIGEN</scope>
    <source>
        <tissue>Renal cell carcinoma</tissue>
    </source>
</reference>
<reference key="15">
    <citation type="journal article" date="1999" name="J. Biol. Chem.">
        <title>A nuclear factor ASC-2, as a cancer-amplified transcriptional coactivator essential for ligand-dependent transactivation by nuclear receptors in vivo.</title>
        <authorList>
            <person name="Lee S.-K."/>
            <person name="Anzick S.L."/>
            <person name="Choi J.-E."/>
            <person name="Bubendorf L."/>
            <person name="Guan X.-Y."/>
            <person name="Jung Y.-K."/>
            <person name="Kallioniemi O.-P."/>
            <person name="Kononen J."/>
            <person name="Trent J.M."/>
            <person name="Azorsa D."/>
            <person name="Jhun B.-H."/>
            <person name="Cheong J.H."/>
            <person name="Lee Y.C."/>
            <person name="Meltzer P.S."/>
            <person name="Lee J.W."/>
        </authorList>
    </citation>
    <scope>INTERACTION WITH NCOA6</scope>
</reference>
<reference key="16">
    <citation type="journal article" date="1999" name="Proc. Natl. Acad. Sci. U.S.A.">
        <title>Steroid receptor coactivator-1 (SRC-1) enhances ligand-dependent and receptor-dependent cell-free transcription of chromatin.</title>
        <authorList>
            <person name="Liu Z."/>
            <person name="Wong J."/>
            <person name="Tsai S.Y."/>
            <person name="Tsai M.-J."/>
            <person name="O'Malley B.W."/>
        </authorList>
    </citation>
    <scope>FUNCTION</scope>
</reference>
<reference key="17">
    <citation type="journal article" date="2000" name="J. Biol. Chem.">
        <title>Phosphorylation of steroid receptor coactivator-1. Identification of the phosphorylation sites and phosphorylation through the mitogen-activated protein kinase pathway.</title>
        <authorList>
            <person name="Rowan B.G."/>
            <person name="Weigel N.L."/>
            <person name="O'Malley B.W."/>
        </authorList>
    </citation>
    <scope>PHOSPHORYLATION AT SER-372; SER-395; SER-517; SER-569; SER-1033; THR-1179 AND SER-1185</scope>
</reference>
<reference key="18">
    <citation type="journal article" date="2000" name="J. Biol. Chem.">
        <title>JAB1 interacts with both the progesterone receptor and SRC-1.</title>
        <authorList>
            <person name="Chauchereau A."/>
            <person name="Georgiakaki M."/>
            <person name="Perrin-Wolff M."/>
            <person name="Milgrom E."/>
            <person name="Loosfelt H."/>
        </authorList>
    </citation>
    <scope>INTERACTION WITH COPS5</scope>
</reference>
<reference key="19">
    <citation type="journal article" date="2000" name="Mol. Cell. Biol.">
        <title>Redox-regulated recruitment of the transcriptional coactivators CREB-binding protein and SRC-1 to hypoxia-inducible factor 1alpha.</title>
        <authorList>
            <person name="Carrero P."/>
            <person name="Okamoto K."/>
            <person name="Coumailleau P."/>
            <person name="O'Brien S."/>
            <person name="Tanaka H."/>
            <person name="Poellinger L."/>
        </authorList>
    </citation>
    <scope>INTERACTION WITH NCOA2</scope>
</reference>
<reference key="20">
    <citation type="journal article" date="2001" name="EMBO J.">
        <title>A subfamily of RNA-binding DEAD-box proteins acts as an estrogen receptor alpha coactivator through the N-terminal activation domain (AF-1) with an RNA coactivator, SRA.</title>
        <authorList>
            <person name="Watanabe M."/>
            <person name="Yanagisawa J."/>
            <person name="Kitagawa H."/>
            <person name="Takeyama K."/>
            <person name="Ogawa S."/>
            <person name="Arao Y."/>
            <person name="Suzawa M."/>
            <person name="Kobayashi Y."/>
            <person name="Yano T."/>
            <person name="Yoshikawa H."/>
            <person name="Masuhiro Y."/>
            <person name="Kato S."/>
        </authorList>
    </citation>
    <scope>INTERACTION WITH DDX5</scope>
</reference>
<reference key="21">
    <citation type="journal article" date="2002" name="J. Biol. Chem.">
        <title>Functional interaction of STAT3 transcription factor with the coactivator NcoA/SRC1a.</title>
        <authorList>
            <person name="Giraud S."/>
            <person name="Bienvenu F."/>
            <person name="Avril S."/>
            <person name="Gascan H."/>
            <person name="Heery D.M."/>
            <person name="Coqueret O."/>
        </authorList>
    </citation>
    <scope>INTERACTION WITH STAT3</scope>
</reference>
<reference key="22">
    <citation type="journal article" date="2002" name="J. Biol. Chem.">
        <title>Identification of protein arginine methyltransferase 2 as a coactivator for estrogen receptor alpha.</title>
        <authorList>
            <person name="Qi C."/>
            <person name="Chang J."/>
            <person name="Zhu Y."/>
            <person name="Yeldandi A.V."/>
            <person name="Rao S.M."/>
            <person name="Zhu Y.-J."/>
        </authorList>
    </citation>
    <scope>INTERACTION WITH PRMT2</scope>
</reference>
<reference key="23">
    <citation type="journal article" date="2002" name="J. Biol. Chem.">
        <title>An LXXLL motif in the transactivation domain of STAT6 mediates recruitment of NCoA-1/SRC-1.</title>
        <authorList>
            <person name="Litterst C.M."/>
            <person name="Pfitzner E."/>
        </authorList>
    </citation>
    <scope>INTERACTION WITH STAT6</scope>
</reference>
<reference key="24">
    <citation type="journal article" date="2003" name="J. Biol. Chem.">
        <title>Sumoylation of the progesterone receptor and of the steroid receptor coactivator SRC-1.</title>
        <authorList>
            <person name="Chauchereau A."/>
            <person name="Amazit L."/>
            <person name="Quesne M."/>
            <person name="Guiochon-Mantel A."/>
            <person name="Milgrom E."/>
        </authorList>
    </citation>
    <scope>SUMOYLATION AT LYS-732 AND LYS-774</scope>
    <scope>UBIQUITINATION</scope>
    <scope>MUTAGENESIS OF LYS-732; LYS-774; LYS-800; LYS-846 AND LYS-1378</scope>
</reference>
<reference key="25">
    <citation type="journal article" date="2003" name="J. Biol. Chem.">
        <title>NCoA-1/SRC-1 is an essential coactivator of STAT5 that binds to the FDL motif in the alpha-helical region of the STAT5 transactivation domain.</title>
        <authorList>
            <person name="Litterst C.M."/>
            <person name="Kliem S."/>
            <person name="Marilley D."/>
            <person name="Pfitzner E."/>
        </authorList>
    </citation>
    <scope>FUNCTION</scope>
    <scope>INTERACTION WITH STAT5A AND STAT5B</scope>
</reference>
<reference key="26">
    <citation type="journal article" date="2003" name="Mol. Cell. Biol.">
        <title>BAF60a mediates critical interactions between nuclear receptors and the BRG1 chromatin-remodeling complex for transactivation.</title>
        <authorList>
            <person name="Hsiao P.W."/>
            <person name="Fryer C.J."/>
            <person name="Trotter K.W."/>
            <person name="Wang W."/>
            <person name="Archer T.K."/>
        </authorList>
    </citation>
    <scope>INTERACTION WITH NR3C1</scope>
</reference>
<reference key="27">
    <citation type="journal article" date="2004" name="Mol. Cell. Biol.">
        <title>The ubiquitin-conjugating enzyme UBCH7 acts as a coactivator for steroid hormone receptors.</title>
        <authorList>
            <person name="Verma S."/>
            <person name="Ismail A."/>
            <person name="Gao X."/>
            <person name="Fu G."/>
            <person name="Li X."/>
            <person name="O'Malley B.W."/>
            <person name="Nawaz Z."/>
        </authorList>
    </citation>
    <scope>INTERACTION WITH UBE2L3</scope>
</reference>
<reference key="28">
    <citation type="journal article" date="2006" name="EMBO J.">
        <title>The catalytic subunit of the proteasome is engaged in the entire process of estrogen receptor-regulated transcription.</title>
        <authorList>
            <person name="Zhang H."/>
            <person name="Sun L."/>
            <person name="Liang J."/>
            <person name="Yu W."/>
            <person name="Zhang Y."/>
            <person name="Wang Y."/>
            <person name="Chen Y."/>
            <person name="Li R."/>
            <person name="Sun X."/>
            <person name="Shang Y."/>
        </authorList>
    </citation>
    <scope>INTERACTION WITH PSMB9</scope>
</reference>
<reference key="29">
    <citation type="journal article" date="2006" name="J. Biol. Chem.">
        <title>Additional sex comb-like 1 (ASXL1), in cooperation with SRC-1, acts as a ligand-dependent coactivator for retinoic acid receptor.</title>
        <authorList>
            <person name="Cho Y.S."/>
            <person name="Kim E.J."/>
            <person name="Park U.H."/>
            <person name="Sin H.S."/>
            <person name="Um S.J."/>
        </authorList>
    </citation>
    <scope>INTERACTION WITH ASXL1</scope>
</reference>
<reference key="30">
    <citation type="journal article" date="2007" name="Mol. Cell. Biol.">
        <title>STAMP, a novel predicted factor assisting TIF2 actions in glucocorticoid receptor-mediated induction and repression.</title>
        <authorList>
            <person name="He Y."/>
            <person name="Simons S.S. Jr."/>
        </authorList>
    </citation>
    <scope>INTERACTION WITH TTLL5</scope>
    <source>
        <tissue>Testis</tissue>
    </source>
</reference>
<reference key="31">
    <citation type="journal article" date="2007" name="Science">
        <title>ATM and ATR substrate analysis reveals extensive protein networks responsive to DNA damage.</title>
        <authorList>
            <person name="Matsuoka S."/>
            <person name="Ballif B.A."/>
            <person name="Smogorzewska A."/>
            <person name="McDonald E.R. III"/>
            <person name="Hurov K.E."/>
            <person name="Luo J."/>
            <person name="Bakalarski C.E."/>
            <person name="Zhao Z."/>
            <person name="Solimini N."/>
            <person name="Lerenthal Y."/>
            <person name="Shiloh Y."/>
            <person name="Gygi S.P."/>
            <person name="Elledge S.J."/>
        </authorList>
    </citation>
    <scope>IDENTIFICATION BY MASS SPECTROMETRY [LARGE SCALE ANALYSIS]</scope>
    <source>
        <tissue>Embryonic kidney</tissue>
    </source>
</reference>
<reference key="32">
    <citation type="journal article" date="2008" name="Nat. Chem. Biol.">
        <title>Cytosporone B is an agonist for nuclear orphan receptor Nur77.</title>
        <authorList>
            <person name="Zhan Y."/>
            <person name="Du X."/>
            <person name="Chen H."/>
            <person name="Liu J."/>
            <person name="Zhao B."/>
            <person name="Huang D."/>
            <person name="Li G."/>
            <person name="Xu Q."/>
            <person name="Zhang M."/>
            <person name="Weimer B.C."/>
            <person name="Chen D."/>
            <person name="Cheng Z."/>
            <person name="Zhang L."/>
            <person name="Li Q."/>
            <person name="Li S."/>
            <person name="Zheng Z."/>
            <person name="Song S."/>
            <person name="Huang Y."/>
            <person name="Ye Z."/>
            <person name="Su W."/>
            <person name="Lin S.C."/>
            <person name="Shen Y."/>
            <person name="Wu Q."/>
        </authorList>
    </citation>
    <scope>INTERACTION WITH NR4A1</scope>
</reference>
<reference key="33">
    <citation type="journal article" date="2009" name="Anal. Chem.">
        <title>Lys-N and trypsin cover complementary parts of the phosphoproteome in a refined SCX-based approach.</title>
        <authorList>
            <person name="Gauci S."/>
            <person name="Helbig A.O."/>
            <person name="Slijper M."/>
            <person name="Krijgsveld J."/>
            <person name="Heck A.J."/>
            <person name="Mohammed S."/>
        </authorList>
    </citation>
    <scope>ACETYLATION [LARGE SCALE ANALYSIS] AT SER-2</scope>
    <scope>CLEAVAGE OF INITIATOR METHIONINE [LARGE SCALE ANALYSIS]</scope>
    <scope>IDENTIFICATION BY MASS SPECTROMETRY [LARGE SCALE ANALYSIS]</scope>
</reference>
<reference key="34">
    <citation type="journal article" date="2009" name="Mol. Pharmacol.">
        <title>The basic helix-loop-helix proteins differentiated embryo chondrocyte (DEC) 1 and DEC2 function as corepressors of retinoid X receptors.</title>
        <authorList>
            <person name="Cho Y."/>
            <person name="Noshiro M."/>
            <person name="Choi M."/>
            <person name="Morita K."/>
            <person name="Kawamoto T."/>
            <person name="Fujimoto K."/>
            <person name="Kato Y."/>
            <person name="Makishima M."/>
        </authorList>
    </citation>
    <scope>INTERACTION WITH RXRA</scope>
</reference>
<reference key="35">
    <citation type="journal article" date="2010" name="Nucleic Acids Res.">
        <title>Protein arginine methyltransferase 6 regulates multiple aspects of gene expression.</title>
        <authorList>
            <person name="Harrison M.J."/>
            <person name="Tang Y.H."/>
            <person name="Dowhan D.H."/>
        </authorList>
    </citation>
    <scope>INTERACTION WITH PRMT6</scope>
</reference>
<reference key="36">
    <citation type="journal article" date="2010" name="Sci. Signal.">
        <title>Quantitative phosphoproteomics reveals widespread full phosphorylation site occupancy during mitosis.</title>
        <authorList>
            <person name="Olsen J.V."/>
            <person name="Vermeulen M."/>
            <person name="Santamaria A."/>
            <person name="Kumar C."/>
            <person name="Miller M.L."/>
            <person name="Jensen L.J."/>
            <person name="Gnad F."/>
            <person name="Cox J."/>
            <person name="Jensen T.S."/>
            <person name="Nigg E.A."/>
            <person name="Brunak S."/>
            <person name="Mann M."/>
        </authorList>
    </citation>
    <scope>PHOSPHORYLATION [LARGE SCALE ANALYSIS] AT SER-395</scope>
    <scope>IDENTIFICATION BY MASS SPECTROMETRY [LARGE SCALE ANALYSIS]</scope>
    <source>
        <tissue>Cervix carcinoma</tissue>
    </source>
</reference>
<reference key="37">
    <citation type="journal article" date="2013" name="J. Proteome Res.">
        <title>Toward a comprehensive characterization of a human cancer cell phosphoproteome.</title>
        <authorList>
            <person name="Zhou H."/>
            <person name="Di Palma S."/>
            <person name="Preisinger C."/>
            <person name="Peng M."/>
            <person name="Polat A.N."/>
            <person name="Heck A.J."/>
            <person name="Mohammed S."/>
        </authorList>
    </citation>
    <scope>PHOSPHORYLATION [LARGE SCALE ANALYSIS] AT SER-22; SER-372; SER-395; SER-698 AND SER-1372</scope>
    <scope>IDENTIFICATION BY MASS SPECTROMETRY [LARGE SCALE ANALYSIS]</scope>
    <source>
        <tissue>Cervix carcinoma</tissue>
        <tissue>Erythroleukemia</tissue>
    </source>
</reference>
<reference key="38">
    <citation type="journal article" date="2014" name="Mol. Cell">
        <title>Modification of ASC1 by UFM1 is crucial for ERalpha transactivation and breast cancer development.</title>
        <authorList>
            <person name="Yoo H.M."/>
            <person name="Kang S.H."/>
            <person name="Kim J.Y."/>
            <person name="Lee J.E."/>
            <person name="Seong M.W."/>
            <person name="Lee S.W."/>
            <person name="Ka S.H."/>
            <person name="Sou Y.S."/>
            <person name="Komatsu M."/>
            <person name="Tanaka K."/>
            <person name="Lee S.T."/>
            <person name="Noh D.Y."/>
            <person name="Baek S.H."/>
            <person name="Jeon Y.J."/>
            <person name="Chung C.H."/>
        </authorList>
    </citation>
    <scope>INTERACTION WITH TRIP4</scope>
</reference>
<reference key="39">
    <citation type="journal article" date="2017" name="Nat. Struct. Mol. Biol.">
        <title>Site-specific mapping of the human SUMO proteome reveals co-modification with phosphorylation.</title>
        <authorList>
            <person name="Hendriks I.A."/>
            <person name="Lyon D."/>
            <person name="Young C."/>
            <person name="Jensen L.J."/>
            <person name="Vertegaal A.C."/>
            <person name="Nielsen M.L."/>
        </authorList>
    </citation>
    <scope>SUMOYLATION [LARGE SCALE ANALYSIS] AT LYS-846</scope>
    <scope>IDENTIFICATION BY MASS SPECTROMETRY [LARGE SCALE ANALYSIS]</scope>
</reference>
<reference key="40">
    <citation type="journal article" date="2017" name="Sci. Rep.">
        <title>Functional analyses of a novel missense and other mutations of the vitamin D receptor in association with alopecia.</title>
        <authorList>
            <person name="Tamura M."/>
            <person name="Ishizawa M."/>
            <person name="Isojima T."/>
            <person name="Oezen S."/>
            <person name="Oka A."/>
            <person name="Makishima M."/>
            <person name="Kitanaka S."/>
        </authorList>
    </citation>
    <scope>INTERACTION WITH VDR</scope>
</reference>
<reference evidence="47" key="41">
    <citation type="journal article" date="1998" name="Nature">
        <title>Ligand binding and co-activator assembly of the peroxisome proliferator-activated receptor-gamma.</title>
        <authorList>
            <person name="Nolte R.T."/>
            <person name="Wisely G.B."/>
            <person name="Westin S."/>
            <person name="Cobb J.E."/>
            <person name="Lambert M.H."/>
            <person name="Kurokawa R."/>
            <person name="Rosenfeld M.G."/>
            <person name="Willson T.M."/>
            <person name="Glass C.K."/>
            <person name="Milburn M.V."/>
        </authorList>
    </citation>
    <scope>X-RAY CRYSTALLOGRAPHY (2.3 ANGSTROMS) OF 623-710 IN COMPLEX WITH PPARG</scope>
</reference>
<reference evidence="44 45" key="42">
    <citation type="journal article" date="2001" name="Proc. Natl. Acad. Sci. U.S.A.">
        <title>Structural determinants of ligand binding selectivity between the peroxisome proliferator-activated receptors.</title>
        <authorList>
            <person name="Xu H.E."/>
            <person name="Lambert M.H."/>
            <person name="Montana V.G."/>
            <person name="Plunket K.D."/>
            <person name="Moore L.B."/>
            <person name="Collins J.L."/>
            <person name="Oplinger J.A."/>
            <person name="Kliewer S.A."/>
            <person name="Gampe R.T. Jr."/>
            <person name="McKee D.D."/>
            <person name="Moore J.T."/>
            <person name="Willson T.M."/>
        </authorList>
    </citation>
    <scope>X-RAY CRYSTALLOGRAPHY (2.3 ANGSTROMS) OF 687-696 IN COMPLEX WITH PPARA</scope>
    <scope>INTERACTION WITH PPARA AND PPARG</scope>
</reference>
<reference evidence="46" key="43">
    <citation type="journal article" date="2002" name="Mol. Cell">
        <title>Structural and functional evidence for ligand-independent transcriptional activation by the estrogen-related receptor 3.</title>
        <authorList>
            <person name="Greschik H."/>
            <person name="Wurtz J.-M."/>
            <person name="Sanglier S."/>
            <person name="Bourguet W."/>
            <person name="van Dorsselaer A."/>
            <person name="Moras D."/>
            <person name="Renaud J.-P."/>
        </authorList>
    </citation>
    <scope>X-RAY CRYSTALLOGRAPHY (2.7 ANGSTROMS) OF 686-700 IN COMPLEX WITH ESRRG</scope>
</reference>
<protein>
    <recommendedName>
        <fullName>Nuclear receptor coactivator 1</fullName>
        <shortName>NCoA-1</shortName>
        <ecNumber>2.3.1.48</ecNumber>
    </recommendedName>
    <alternativeName>
        <fullName>Class E basic helix-loop-helix protein 74</fullName>
        <shortName>bHLHe74</shortName>
    </alternativeName>
    <alternativeName>
        <fullName>Protein Hin-2</fullName>
    </alternativeName>
    <alternativeName>
        <fullName>RIP160</fullName>
    </alternativeName>
    <alternativeName>
        <fullName>Renal carcinoma antigen NY-REN-52</fullName>
    </alternativeName>
    <alternativeName>
        <fullName>Steroid receptor coactivator 1</fullName>
        <shortName>SRC-1</shortName>
    </alternativeName>
</protein>
<gene>
    <name type="primary">NCOA1</name>
    <name type="synonym">BHLHE74</name>
    <name type="synonym">SRC1</name>
</gene>
<sequence length="1441" mass="156757">MSGLGDSSSDPANPDSHKRKGSPCDTLASSTEKRRREQENKYLEELAELLSANISDIDSLSVKPDKCKILKKTVDQIQLMKRMEQEKSTTDDDVQKSDISSSSQGVIEKESLGPLLLEALDGFFFVVNCEGRIVFVSENVTSYLGYNQEELMNTSVYSILHVGDHAEFVKNLLPKSLVNGVPWPQEATRRNSHTFNCRMLIHPPDEPGTENQEACQRYEVMQCFTVSQPKSIQEDGEDFQSCLICIARRLPRPPAITGVESFMTKQDTTGKIISIDTSSLRAAGRTGWEDLVRKCIYAFFQPQGREPSYARQLFQEVMTRGTASSPSYRFILNDGTMLSAHTKCKLCYPQSPDMQPFIMGIHIIDREHSGLSPQDDTNSGMSIPRVNPSVNPSISPAHGVARSSTLPPSNSNMVSTRINRQQSSDLHSSSHSNSSNSQGSFGCSPGSQIVANVALNQGQASSQSSNPSLNLNNSPMEGTGISLAQFMSPRRQVTSGLATRPRMPNNSFPPNISTLSSPVGMTSSACNNNNRSYSNIPVTSLQGMNEGPNNSVGFSASSPVLRQMSSQNSPSRLNIQPAKAESKDNKEIASILNEMIQSDNSSSDGKPLDSGLLHNNDRLSDGDSKYSQTSHKLVQLLTTTAEQQLRHADIDTSCKDVLSCTGTSNSASANSSGGSCPSSHSSLTERHKILHRLLQEGSPSDITTLSVEPDKKDSASTSVSVTGQVQGNSSIKLELDASKKKESKDHQLLRYLLDKDEKDLRSTPNLSLDDVKVKVEKKEQMDPCNTNPTPMTKPTPEEIKLEAQSQFTADLDQFDQLLPTLEKAAQLPGLCETDRMDGAVTSVTIKSEILPASLQSATARPTSRLNRLPELELEAIDNQFGQPGTGDQIPWTNNTVTAINQSKSEDQCISSQLDELLCPPTTVEGRNDEKALLEQLVSFLSGKDETELAELDRALGIDKLVQGGGLDVLSERFPPQQATPPLIMEERPNLYSQPYSSPSPTANLPSPFQGMVRQKPSLGTMPVQVTPPRGAFSPGMGMQPRQTLNRPPAAPNQLRLQLQQRLQGQQQLIHQNRQAILNQFAATAPVGINMRSGMQQQITPQPPLNAQMLAQRQRELYSQQHRQRQLIQQQRAMLMRQQSFGNNLPPSSGLPVQMGNPRLPQGAPQQFPYPPNYGTNPGTPPASTSPFSQLAANPEASLANRNSMVSRGMTGNIGGQFGTGINPQMQQNVFQYPGAGMVPQGEANFAPSLSPGSSMVPMPIPPPQSSLLQQTPPASGYQSPDMKAWQQGAIGNNNVFSQAVQNQPTPAQPGVYNNMSITVSMAGGNTNVQNMNPMMAQMQMSSLQMPGMNTVCPEQINDPALRHTGLYCNQLSSTDLLKTEADGTQQVQQVQVFADVQCTVNLVGGDPYLNQPGPLGTQKPTSGPQTPQAQQKSLLQQLLTE</sequence>
<keyword id="KW-0002">3D-structure</keyword>
<keyword id="KW-0007">Acetylation</keyword>
<keyword id="KW-0010">Activator</keyword>
<keyword id="KW-0012">Acyltransferase</keyword>
<keyword id="KW-0025">Alternative splicing</keyword>
<keyword id="KW-0160">Chromosomal rearrangement</keyword>
<keyword id="KW-1017">Isopeptide bond</keyword>
<keyword id="KW-0488">Methylation</keyword>
<keyword id="KW-0539">Nucleus</keyword>
<keyword id="KW-0597">Phosphoprotein</keyword>
<keyword id="KW-1267">Proteomics identification</keyword>
<keyword id="KW-0656">Proto-oncogene</keyword>
<keyword id="KW-1185">Reference proteome</keyword>
<keyword id="KW-0677">Repeat</keyword>
<keyword id="KW-0804">Transcription</keyword>
<keyword id="KW-0805">Transcription regulation</keyword>
<keyword id="KW-0808">Transferase</keyword>
<keyword id="KW-0832">Ubl conjugation</keyword>
<feature type="initiator methionine" description="Removed" evidence="48">
    <location>
        <position position="1"/>
    </location>
</feature>
<feature type="chain" id="PRO_0000094400" description="Nuclear receptor coactivator 1">
    <location>
        <begin position="2"/>
        <end position="1441"/>
    </location>
</feature>
<feature type="domain" description="bHLH" evidence="3">
    <location>
        <begin position="23"/>
        <end position="80"/>
    </location>
</feature>
<feature type="domain" description="PAS" evidence="2">
    <location>
        <begin position="109"/>
        <end position="180"/>
    </location>
</feature>
<feature type="region of interest" description="Disordered" evidence="4">
    <location>
        <begin position="1"/>
        <end position="39"/>
    </location>
</feature>
<feature type="region of interest" description="Disordered" evidence="4">
    <location>
        <begin position="83"/>
        <end position="105"/>
    </location>
</feature>
<feature type="region of interest" description="Interaction with STAT3" evidence="12">
    <location>
        <begin position="361"/>
        <end position="567"/>
    </location>
</feature>
<feature type="region of interest" description="Disordered" evidence="4">
    <location>
        <begin position="368"/>
        <end position="443"/>
    </location>
</feature>
<feature type="region of interest" description="Disordered" evidence="4">
    <location>
        <begin position="457"/>
        <end position="477"/>
    </location>
</feature>
<feature type="region of interest" description="Disordered" evidence="4">
    <location>
        <begin position="561"/>
        <end position="585"/>
    </location>
</feature>
<feature type="region of interest" description="Disordered" evidence="4">
    <location>
        <begin position="597"/>
        <end position="626"/>
    </location>
</feature>
<feature type="region of interest" description="Disordered" evidence="4">
    <location>
        <begin position="662"/>
        <end position="723"/>
    </location>
</feature>
<feature type="region of interest" description="Interaction with CREBBP">
    <location>
        <begin position="781"/>
        <end position="988"/>
    </location>
</feature>
<feature type="region of interest" description="Disordered" evidence="4">
    <location>
        <begin position="1143"/>
        <end position="1188"/>
    </location>
</feature>
<feature type="region of interest" description="Disordered" evidence="4">
    <location>
        <begin position="1409"/>
        <end position="1441"/>
    </location>
</feature>
<feature type="short sequence motif" description="LXXLL motif 1">
    <location>
        <begin position="46"/>
        <end position="50"/>
    </location>
</feature>
<feature type="short sequence motif" description="LXXLL motif 2">
    <location>
        <begin position="112"/>
        <end position="116"/>
    </location>
</feature>
<feature type="short sequence motif" description="LXXLL motif 3">
    <location>
        <begin position="633"/>
        <end position="637"/>
    </location>
</feature>
<feature type="short sequence motif" description="LXXLL motif 4">
    <location>
        <begin position="690"/>
        <end position="694"/>
    </location>
</feature>
<feature type="short sequence motif" description="LXXLL motif 5">
    <location>
        <begin position="749"/>
        <end position="753"/>
    </location>
</feature>
<feature type="short sequence motif" description="LXXLL motif 6">
    <location>
        <begin position="913"/>
        <end position="917"/>
    </location>
</feature>
<feature type="short sequence motif" description="LXXLL motif 7">
    <location>
        <begin position="1435"/>
        <end position="1439"/>
    </location>
</feature>
<feature type="compositionally biased region" description="Polar residues" evidence="4">
    <location>
        <begin position="1"/>
        <end position="11"/>
    </location>
</feature>
<feature type="compositionally biased region" description="Basic and acidic residues" evidence="4">
    <location>
        <begin position="83"/>
        <end position="96"/>
    </location>
</feature>
<feature type="compositionally biased region" description="Polar residues" evidence="4">
    <location>
        <begin position="371"/>
        <end position="381"/>
    </location>
</feature>
<feature type="compositionally biased region" description="Polar residues" evidence="4">
    <location>
        <begin position="402"/>
        <end position="421"/>
    </location>
</feature>
<feature type="compositionally biased region" description="Low complexity" evidence="4">
    <location>
        <begin position="422"/>
        <end position="443"/>
    </location>
</feature>
<feature type="compositionally biased region" description="Low complexity" evidence="4">
    <location>
        <begin position="457"/>
        <end position="475"/>
    </location>
</feature>
<feature type="compositionally biased region" description="Polar residues" evidence="4">
    <location>
        <begin position="561"/>
        <end position="574"/>
    </location>
</feature>
<feature type="compositionally biased region" description="Basic and acidic residues" evidence="4">
    <location>
        <begin position="615"/>
        <end position="624"/>
    </location>
</feature>
<feature type="compositionally biased region" description="Low complexity" evidence="4">
    <location>
        <begin position="662"/>
        <end position="682"/>
    </location>
</feature>
<feature type="compositionally biased region" description="Polar residues" evidence="4">
    <location>
        <begin position="697"/>
        <end position="706"/>
    </location>
</feature>
<feature type="compositionally biased region" description="Low complexity" evidence="4">
    <location>
        <begin position="1425"/>
        <end position="1441"/>
    </location>
</feature>
<feature type="site" description="Breakpoint for translocation to form PAX3-NCOA1 oncogene">
    <location>
        <begin position="867"/>
        <end position="868"/>
    </location>
</feature>
<feature type="modified residue" description="N-acetylserine" evidence="48">
    <location>
        <position position="2"/>
    </location>
</feature>
<feature type="modified residue" description="Phosphoserine" evidence="50">
    <location>
        <position position="22"/>
    </location>
</feature>
<feature type="modified residue" description="Phosphoserine" evidence="8 50">
    <location>
        <position position="372"/>
    </location>
</feature>
<feature type="modified residue" description="Phosphoserine" evidence="8 49 50">
    <location>
        <position position="395"/>
    </location>
</feature>
<feature type="modified residue" description="Phosphoserine" evidence="8">
    <location>
        <position position="517"/>
    </location>
</feature>
<feature type="modified residue" description="Phosphoserine" evidence="1">
    <location>
        <position position="558"/>
    </location>
</feature>
<feature type="modified residue" description="Phosphoserine" evidence="8">
    <location>
        <position position="569"/>
    </location>
</feature>
<feature type="modified residue" description="Phosphoserine" evidence="50">
    <location>
        <position position="698"/>
    </location>
</feature>
<feature type="modified residue" description="Phosphoserine" evidence="8">
    <location>
        <position position="1033"/>
    </location>
</feature>
<feature type="modified residue" description="Asymmetric dimethylarginine" evidence="1">
    <location>
        <position position="1073"/>
    </location>
</feature>
<feature type="modified residue" description="Asymmetric dimethylarginine" evidence="1">
    <location>
        <position position="1091"/>
    </location>
</feature>
<feature type="modified residue" description="Asymmetric dimethylarginine" evidence="1">
    <location>
        <position position="1124"/>
    </location>
</feature>
<feature type="modified residue" description="Asymmetric dimethylarginine" evidence="1">
    <location>
        <position position="1131"/>
    </location>
</feature>
<feature type="modified residue" description="Phosphothreonine" evidence="8">
    <location>
        <position position="1179"/>
    </location>
</feature>
<feature type="modified residue" description="Phosphoserine" evidence="8">
    <location>
        <position position="1185"/>
    </location>
</feature>
<feature type="modified residue" description="Phosphoserine" evidence="50">
    <location>
        <position position="1372"/>
    </location>
</feature>
<feature type="cross-link" description="Glycyl lysine isopeptide (Lys-Gly) (interchain with G-Cter in SUMO)" evidence="16">
    <location>
        <position position="732"/>
    </location>
</feature>
<feature type="cross-link" description="Glycyl lysine isopeptide (Lys-Gly) (interchain with G-Cter in SUMO)" evidence="16">
    <location>
        <position position="774"/>
    </location>
</feature>
<feature type="cross-link" description="Glycyl lysine isopeptide (Lys-Gly) (interchain with G-Cter in SUMO2)" evidence="51">
    <location>
        <position position="846"/>
    </location>
</feature>
<feature type="splice variant" id="VSP_011738" description="In isoform 3." evidence="41">
    <location>
        <position position="1385"/>
    </location>
</feature>
<feature type="splice variant" id="VSP_011739" description="In isoform 2." evidence="38 39 40 42">
    <original>QVQQVQVFADVQCTVNLVGGDPYLNQPGPLGTQKPTSGPQTPQAQQKSLLQQLLTE</original>
    <variation>DKKTEEFFSVVTTD</variation>
    <location>
        <begin position="1386"/>
        <end position="1441"/>
    </location>
</feature>
<feature type="sequence variant" id="VAR_019768" description="In dbSNP:rs1049015." evidence="29 30 35">
    <original>Q</original>
    <variation>K</variation>
    <location>
        <position position="457"/>
    </location>
</feature>
<feature type="sequence variant" id="VAR_019769" description="In dbSNP:rs1049016." evidence="29 30 35">
    <original>N</original>
    <variation>K</variation>
    <location>
        <position position="466"/>
    </location>
</feature>
<feature type="sequence variant" id="VAR_019770" description="In dbSNP:rs1049018." evidence="29 30 35">
    <original>S</original>
    <variation>P</variation>
    <location>
        <position position="474"/>
    </location>
</feature>
<feature type="sequence variant" id="VAR_019771" description="In dbSNP:rs1049020." evidence="29 30 35">
    <original>I</original>
    <variation>T</variation>
    <location>
        <position position="591"/>
    </location>
</feature>
<feature type="sequence variant" id="VAR_019772" description="In dbSNP:rs1049021." evidence="29 30 35">
    <original>E</original>
    <variation>A</variation>
    <location>
        <position position="685"/>
    </location>
</feature>
<feature type="sequence variant" id="VAR_019773" description="In dbSNP:rs1049025." evidence="29">
    <original>P</original>
    <variation>A</variation>
    <location>
        <position position="794"/>
    </location>
</feature>
<feature type="sequence variant" id="VAR_019774" description="In dbSNP:rs1049032." evidence="29 30 35">
    <original>S</original>
    <variation>F</variation>
    <location>
        <position position="999"/>
    </location>
</feature>
<feature type="sequence variant" id="VAR_019775" description="In dbSNP:rs1049038." evidence="29 30 35">
    <original>M</original>
    <variation>T</variation>
    <location>
        <position position="1154"/>
    </location>
</feature>
<feature type="sequence variant" id="VAR_038832" description="In dbSNP:rs56099330." evidence="37">
    <original>V</original>
    <variation>I</variation>
    <location>
        <position position="1238"/>
    </location>
</feature>
<feature type="sequence variant" id="VAR_034882" description="In dbSNP:rs1804645." evidence="37">
    <original>P</original>
    <variation>S</variation>
    <location>
        <position position="1272"/>
    </location>
</feature>
<feature type="mutagenesis site" description="Slightly affects interactions with steroid receptors. Abolishes interactions with steroid receptors; when associated with A-693; A-694; A-752 and A-753." evidence="34">
    <original>LL</original>
    <variation>AA</variation>
    <location>
        <begin position="636"/>
        <end position="637"/>
    </location>
</feature>
<feature type="mutagenesis site" description="Slightly affects interactions with steroid receptors. Abolishes interactions with steroid receptors; when associated with A-636; A-637; A-752 and A-753." evidence="34">
    <original>LL</original>
    <variation>AA</variation>
    <location>
        <begin position="693"/>
        <end position="694"/>
    </location>
</feature>
<feature type="mutagenesis site" description="Abolishes sumoylation; when associated with R-774." evidence="16">
    <original>K</original>
    <variation>R</variation>
    <location>
        <position position="732"/>
    </location>
</feature>
<feature type="mutagenesis site" description="Slightly affects interactions with steroid receptors. Abolishes interactions with steroid receptors; when associated with A-636; A-637; A-693 and A-694." evidence="34">
    <original>LL</original>
    <variation>AA</variation>
    <location>
        <begin position="752"/>
        <end position="753"/>
    </location>
</feature>
<feature type="mutagenesis site" description="Abolishes sumoylation; when associated with R-732." evidence="16">
    <original>K</original>
    <variation>R</variation>
    <location>
        <position position="774"/>
    </location>
</feature>
<feature type="mutagenesis site" description="Does not affect sumoylation of the protein." evidence="16">
    <original>K</original>
    <variation>R</variation>
    <location>
        <position position="800"/>
    </location>
</feature>
<feature type="mutagenesis site" description="Does not affect sumoylation of the protein." evidence="16">
    <original>K</original>
    <variation>R</variation>
    <location>
        <position position="846"/>
    </location>
</feature>
<feature type="mutagenesis site" description="Does not affect sumoylation of the protein." evidence="16">
    <original>K</original>
    <variation>R</variation>
    <location>
        <position position="1378"/>
    </location>
</feature>
<feature type="sequence conflict" description="In Ref. 10; AAT47737." evidence="43" ref="10">
    <location>
        <position position="1035"/>
    </location>
</feature>
<feature type="sequence conflict" description="In Ref. 9; AAA64187." evidence="43" ref="9">
    <original>Q</original>
    <variation>H</variation>
    <location>
        <position position="1370"/>
    </location>
</feature>
<feature type="sequence conflict" description="In Ref. 10; AAT47737." evidence="43" ref="10">
    <original>D</original>
    <variation>G</variation>
    <location>
        <position position="1382"/>
    </location>
</feature>
<feature type="sequence conflict" description="In Ref. 3; AAB50242." evidence="43" ref="3">
    <original>L</original>
    <variation>R</variation>
    <location>
        <position position="1435"/>
    </location>
</feature>
<feature type="strand" evidence="55">
    <location>
        <begin position="261"/>
        <end position="266"/>
    </location>
</feature>
<feature type="strand" evidence="55">
    <location>
        <begin position="272"/>
        <end position="276"/>
    </location>
</feature>
<feature type="helix" evidence="55">
    <location>
        <begin position="278"/>
        <end position="283"/>
    </location>
</feature>
<feature type="helix" evidence="55">
    <location>
        <begin position="288"/>
        <end position="299"/>
    </location>
</feature>
<feature type="helix" evidence="55">
    <location>
        <begin position="309"/>
        <end position="319"/>
    </location>
</feature>
<feature type="strand" evidence="55">
    <location>
        <begin position="320"/>
        <end position="324"/>
    </location>
</feature>
<feature type="strand" evidence="55">
    <location>
        <begin position="328"/>
        <end position="331"/>
    </location>
</feature>
<feature type="strand" evidence="55">
    <location>
        <begin position="337"/>
        <end position="347"/>
    </location>
</feature>
<feature type="strand" evidence="55">
    <location>
        <begin position="350"/>
        <end position="353"/>
    </location>
</feature>
<feature type="strand" evidence="55">
    <location>
        <begin position="357"/>
        <end position="365"/>
    </location>
</feature>
<feature type="helix" evidence="58">
    <location>
        <begin position="632"/>
        <end position="638"/>
    </location>
</feature>
<feature type="helix" evidence="54">
    <location>
        <begin position="684"/>
        <end position="686"/>
    </location>
</feature>
<feature type="helix" evidence="52">
    <location>
        <begin position="688"/>
        <end position="695"/>
    </location>
</feature>
<feature type="helix" evidence="56">
    <location>
        <begin position="747"/>
        <end position="753"/>
    </location>
</feature>
<feature type="turn" evidence="53">
    <location>
        <begin position="924"/>
        <end position="926"/>
    </location>
</feature>
<feature type="helix" evidence="53">
    <location>
        <begin position="929"/>
        <end position="941"/>
    </location>
</feature>
<feature type="helix" evidence="53">
    <location>
        <begin position="945"/>
        <end position="947"/>
    </location>
</feature>
<feature type="helix" evidence="53">
    <location>
        <begin position="952"/>
        <end position="954"/>
    </location>
</feature>
<feature type="turn" evidence="53">
    <location>
        <begin position="958"/>
        <end position="962"/>
    </location>
</feature>
<feature type="strand" evidence="53">
    <location>
        <begin position="964"/>
        <end position="966"/>
    </location>
</feature>
<feature type="helix" evidence="57">
    <location>
        <begin position="1434"/>
        <end position="1440"/>
    </location>
</feature>
<proteinExistence type="evidence at protein level"/>
<comment type="function">
    <text evidence="5 18 29 31 32 33 34">Nuclear receptor coactivator that directly binds nuclear receptors and stimulates the transcriptional activities in a hormone-dependent fashion. Involved in the coactivation of different nuclear receptors, such as for steroids (PGR, GR and ER), retinoids (RXRs), thyroid hormone (TRs) and prostanoids (PPARs). Also involved in coactivation mediated by STAT3, STAT5A, STAT5B and STAT6 transcription factors. Displays histone acetyltransferase activity toward H3 and H4; the relevance of such activity remains however unclear. Plays a central role in creating multisubunit coactivator complexes that act via remodeling of chromatin, and possibly acts by participating in both chromatin remodeling and recruitment of general transcription factors. Required with NCOA2 to control energy balance between white and brown adipose tissues. Required for mediating steroid hormone response. Isoform 2 has a higher thyroid hormone-dependent transactivation activity than isoform 1 and isoform 3.</text>
</comment>
<comment type="catalytic activity">
    <reaction>
        <text>L-lysyl-[protein] + acetyl-CoA = N(6)-acetyl-L-lysyl-[protein] + CoA + H(+)</text>
        <dbReference type="Rhea" id="RHEA:45948"/>
        <dbReference type="Rhea" id="RHEA-COMP:9752"/>
        <dbReference type="Rhea" id="RHEA-COMP:10731"/>
        <dbReference type="ChEBI" id="CHEBI:15378"/>
        <dbReference type="ChEBI" id="CHEBI:29969"/>
        <dbReference type="ChEBI" id="CHEBI:57287"/>
        <dbReference type="ChEBI" id="CHEBI:57288"/>
        <dbReference type="ChEBI" id="CHEBI:61930"/>
        <dbReference type="EC" id="2.3.1.48"/>
    </reaction>
</comment>
<comment type="subunit">
    <text evidence="1 6 7 9 10 11 12 13 14 15 17 18 20 21 22 23 24 25 26 27 28 29 30 33 36">Interacts with PPARA; the interaction is direct (PubMed:11698662). Interacts with PPARG; the interaction is direct (PubMed:11698662, PubMed:9744270). Interacts with ESRRG; the interaction is direct (PubMed:11864604). Interacts with STAT5A (via FDL motif) (PubMed:12954634). Interacts with STAT5B (via FDL motif) (PubMed:12954634). Interacts with STAT6 (via LXXLL motif) (PubMed:12138096). Interacts (via LXXLL 1, 2 and 3 motifs) with RORC (via AF-2 motif) (By similarity). Interacts with ASXL1 (PubMed:16606617). Interacts with the methyltransferase CARM1 (By similarity). Interacts with COPS5 (PubMed:10722692). Interacts with the histone acetyltransferase CREBBP (By similarity). Interacts with DDX5 (PubMed:11250900). Interacts with the histone acetyltransferase EP300 (By similarity). Interacts with ESR1 (PubMed:7481822). Interacts with GCCR (PubMed:7481822). Interacts with the basal transcription factor GTF2B (PubMed:8754792). Interacts with NCOA6 (PubMed:10567404). Interacts with NCOA2 (PubMed:10594042). Interacts with NR3C1 (PubMed:12917342). Interacts with NR4A1/Nur77 (PubMed:18690216). Interacts with NR4A3 (By similarity). Interacts with PCAF (PubMed:9296499). Interacts with PGR (PubMed:7481822). Interacts with PRMT2 (PubMed:12039952). Interacts with PRMT6 (PubMed:20047962). Interacts with PSMB9 (PubMed:16957778). Interacts with RXRA, the interaction is ligand-dependent (PubMed:19786558, PubMed:7481822). Interacts with STAT3 following IL-6 stimulation (PubMed:11773079). Interacts with TRA (PubMed:7481822). Interacts with TRIP4 (PubMed:25219498). Interacts with TTLL5/STAMP (PubMed:17116691). Interacts with UBE2L3; they functionally interact to regulate progesterone receptor transcriptional activity (PubMed:15367689). Interacts with VDR (PubMed:28698609).</text>
</comment>
<comment type="interaction">
    <interactant intactId="EBI-455189">
        <id>Q15788</id>
    </interactant>
    <interactant intactId="EBI-78473">
        <id>P03372</id>
        <label>ESR1</label>
    </interactant>
    <organismsDiffer>false</organismsDiffer>
    <experiments>8</experiments>
</comment>
<comment type="interaction">
    <interactant intactId="EBI-455189">
        <id>Q15788</id>
    </interactant>
    <interactant intactId="EBI-2556193">
        <id>Q63ZY3</id>
        <label>KANK2</label>
    </interactant>
    <organismsDiffer>false</organismsDiffer>
    <experiments>4</experiments>
</comment>
<comment type="interaction">
    <interactant intactId="EBI-455189">
        <id>Q15788</id>
    </interactant>
    <interactant intactId="EBI-781356">
        <id>Q13133</id>
        <label>NR1H3</label>
    </interactant>
    <organismsDiffer>false</organismsDiffer>
    <experiments>15</experiments>
</comment>
<comment type="interaction">
    <interactant intactId="EBI-455189">
        <id>Q15788</id>
    </interactant>
    <interactant intactId="EBI-1250177">
        <id>Q96RI1</id>
        <label>NR1H4</label>
    </interactant>
    <organismsDiffer>false</organismsDiffer>
    <experiments>4</experiments>
</comment>
<comment type="interaction">
    <interactant intactId="EBI-455189">
        <id>Q15788</id>
    </interactant>
    <interactant intactId="EBI-9640524">
        <id>Q96RI1-2</id>
        <label>NR1H4</label>
    </interactant>
    <organismsDiffer>false</organismsDiffer>
    <experiments>5</experiments>
</comment>
<comment type="interaction">
    <interactant intactId="EBI-455189">
        <id>Q15788</id>
    </interactant>
    <interactant intactId="EBI-3905991">
        <id>O75469</id>
        <label>NR1I2</label>
    </interactant>
    <organismsDiffer>false</organismsDiffer>
    <experiments>5</experiments>
</comment>
<comment type="interaction">
    <interactant intactId="EBI-455189">
        <id>Q15788</id>
    </interactant>
    <interactant intactId="EBI-2372223">
        <id>Q9BTK6</id>
        <label>PAGR1</label>
    </interactant>
    <organismsDiffer>false</organismsDiffer>
    <experiments>4</experiments>
</comment>
<comment type="interaction">
    <interactant intactId="EBI-455189">
        <id>Q15788</id>
    </interactant>
    <interactant intactId="EBI-603300">
        <id>P28065</id>
        <label>PSMB9</label>
    </interactant>
    <organismsDiffer>false</organismsDiffer>
    <experiments>3</experiments>
</comment>
<comment type="interaction">
    <interactant intactId="EBI-455189">
        <id>Q15788</id>
    </interactant>
    <interactant intactId="EBI-413374">
        <id>P10276</id>
        <label>RARA</label>
    </interactant>
    <organismsDiffer>false</organismsDiffer>
    <experiments>7</experiments>
</comment>
<comment type="interaction">
    <interactant intactId="EBI-455189">
        <id>Q15788</id>
    </interactant>
    <interactant intactId="EBI-3908771">
        <id>P51449</id>
        <label>RORC</label>
    </interactant>
    <organismsDiffer>false</organismsDiffer>
    <experiments>2</experiments>
</comment>
<comment type="interaction">
    <interactant intactId="EBI-455189">
        <id>Q15788</id>
    </interactant>
    <interactant intactId="EBI-78598">
        <id>P19793</id>
        <label>RXRA</label>
    </interactant>
    <organismsDiffer>false</organismsDiffer>
    <experiments>14</experiments>
</comment>
<comment type="interaction">
    <interactant intactId="EBI-455189">
        <id>Q15788</id>
    </interactant>
    <interactant intactId="EBI-348333">
        <id>Q13569</id>
        <label>TDG</label>
    </interactant>
    <organismsDiffer>false</organismsDiffer>
    <experiments>8</experiments>
</comment>
<comment type="interaction">
    <interactant intactId="EBI-455189">
        <id>Q15788</id>
    </interactant>
    <interactant intactId="EBI-719493">
        <id>P14373</id>
        <label>TRIM27</label>
    </interactant>
    <organismsDiffer>false</organismsDiffer>
    <experiments>3</experiments>
</comment>
<comment type="interaction">
    <interactant intactId="EBI-455189">
        <id>Q15788</id>
    </interactant>
    <interactant intactId="EBI-286357">
        <id>P11473</id>
        <label>VDR</label>
    </interactant>
    <organismsDiffer>false</organismsDiffer>
    <experiments>3</experiments>
</comment>
<comment type="interaction">
    <interactant intactId="EBI-455189">
        <id>Q15788</id>
    </interactant>
    <interactant intactId="EBI-5743705">
        <id>P59598</id>
        <label>Asxl1</label>
    </interactant>
    <organismsDiffer>true</organismsDiffer>
    <experiments>2</experiments>
</comment>
<comment type="interaction">
    <interactant intactId="EBI-455189">
        <id>Q15788</id>
    </interactant>
    <interactant intactId="EBI-346765">
        <id>P19785</id>
        <label>Esr1</label>
    </interactant>
    <organismsDiffer>true</organismsDiffer>
    <experiments>3</experiments>
</comment>
<comment type="interaction">
    <interactant intactId="EBI-455189">
        <id>Q15788</id>
    </interactant>
    <interactant intactId="EBI-643958">
        <id>P25799</id>
        <label>Nfkb1</label>
    </interactant>
    <organismsDiffer>true</organismsDiffer>
    <experiments>2</experiments>
</comment>
<comment type="interaction">
    <interactant intactId="EBI-455189">
        <id>Q15788</id>
    </interactant>
    <interactant intactId="EBI-1187143">
        <id>P06536</id>
        <label>Nr3c1</label>
    </interactant>
    <organismsDiffer>true</organismsDiffer>
    <experiments>2</experiments>
</comment>
<comment type="interaction">
    <interactant intactId="EBI-455189">
        <id>Q15788</id>
    </interactant>
    <interactant intactId="EBI-4320525">
        <id>P56581</id>
        <label>Tdg</label>
    </interactant>
    <organismsDiffer>true</organismsDiffer>
    <experiments>4</experiments>
</comment>
<comment type="interaction">
    <interactant intactId="EBI-5327712">
        <id>Q15788-2</id>
    </interactant>
    <interactant intactId="EBI-348333">
        <id>Q13569</id>
        <label>TDG</label>
    </interactant>
    <organismsDiffer>false</organismsDiffer>
    <experiments>2</experiments>
</comment>
<comment type="subcellular location">
    <subcellularLocation>
        <location evidence="3">Nucleus</location>
    </subcellularLocation>
</comment>
<comment type="alternative products">
    <event type="alternative splicing"/>
    <isoform>
        <id>Q15788-1</id>
        <name>1</name>
        <name>SRC-1A</name>
        <name>SRC1a</name>
        <sequence type="displayed"/>
    </isoform>
    <isoform>
        <id>Q15788-2</id>
        <name>2</name>
        <name>SRC-1E</name>
        <name>SRC1e</name>
        <sequence type="described" ref="VSP_011739"/>
    </isoform>
    <isoform>
        <id>Q15788-3</id>
        <name>3</name>
        <name>SRC-1 (-Q)</name>
        <sequence type="described" ref="VSP_011738"/>
    </isoform>
</comment>
<comment type="tissue specificity">
    <text evidence="19 34">Widely expressed.</text>
</comment>
<comment type="domain">
    <text>The C-terminal (1107-1441) part mediates the histone acetyltransferase (HAT) activity.</text>
</comment>
<comment type="domain">
    <text>Contains 7 Leu-Xaa-Xaa-Leu-Leu (LXXLL) motifs. LXXLL motifs 3, 4 and 5 are essential for the association with nuclear receptors. LXXLL motif 7, which is not present in isoform 2, increases the affinity for steroid receptors in vitro.</text>
</comment>
<comment type="PTM">
    <text evidence="16">Sumoylated; sumoylation increases its interaction with PGR and prolongs its retention in the nucleus. It does not prevent its ubiquitination and does not exert a clear effect on the stability of the protein.</text>
</comment>
<comment type="PTM">
    <text evidence="16">Ubiquitinated; leading to proteasome-mediated degradation. Ubiquitination and sumoylation take place at different sites.</text>
</comment>
<comment type="disease">
    <text evidence="19">A chromosomal aberration involving NCOA1 is a cause of rhabdomyosarcoma. Translocation t(2;2)(q35;p23) with PAX3 generates the NCOA1-PAX3 oncogene consisting of the N-terminus part of PAX3 and the C-terminus part of NCOA1. The fusion protein acts as a transcriptional activator. Rhabdomyosarcoma is the most common soft tissue carcinoma in childhood, representing 5-8% of all malignancies in children.</text>
</comment>
<comment type="miscellaneous">
    <molecule>Isoform 2</molecule>
    <text evidence="43">Major form. Contains a domain at its C-terminus (1241-1399) that is able to mediate transactivation.</text>
</comment>
<comment type="similarity">
    <text evidence="43">Belongs to the SRC/p160 nuclear receptor coactivator family.</text>
</comment>
<comment type="sequence caution" evidence="43">
    <conflict type="erroneous initiation">
        <sequence resource="EMBL-CDS" id="AAA64187"/>
    </conflict>
    <text>Truncated N-terminus.</text>
</comment>
<comment type="sequence caution" evidence="43">
    <conflict type="erroneous initiation">
        <sequence resource="EMBL-CDS" id="AAC50305"/>
    </conflict>
    <text>Truncated N-terminus.</text>
</comment>